<keyword id="KW-0002">3D-structure</keyword>
<keyword id="KW-0023">Alport syndrome</keyword>
<keyword id="KW-0025">Alternative splicing</keyword>
<keyword id="KW-0084">Basement membrane</keyword>
<keyword id="KW-0160">Chromosomal rearrangement</keyword>
<keyword id="KW-0176">Collagen</keyword>
<keyword id="KW-0209">Deafness</keyword>
<keyword id="KW-0225">Disease variant</keyword>
<keyword id="KW-1015">Disulfide bond</keyword>
<keyword id="KW-0272">Extracellular matrix</keyword>
<keyword id="KW-0325">Glycoprotein</keyword>
<keyword id="KW-0379">Hydroxylation</keyword>
<keyword id="KW-1267">Proteomics identification</keyword>
<keyword id="KW-1185">Reference proteome</keyword>
<keyword id="KW-0677">Repeat</keyword>
<keyword id="KW-0964">Secreted</keyword>
<keyword id="KW-0732">Signal</keyword>
<evidence type="ECO:0000250" key="1"/>
<evidence type="ECO:0000255" key="2"/>
<evidence type="ECO:0000255" key="3">
    <source>
        <dbReference type="PROSITE-ProRule" id="PRU00736"/>
    </source>
</evidence>
<evidence type="ECO:0000256" key="4">
    <source>
        <dbReference type="SAM" id="MobiDB-lite"/>
    </source>
</evidence>
<evidence type="ECO:0000269" key="5">
    <source>
    </source>
</evidence>
<evidence type="ECO:0000269" key="6">
    <source>
    </source>
</evidence>
<evidence type="ECO:0000269" key="7">
    <source>
    </source>
</evidence>
<evidence type="ECO:0000269" key="8">
    <source>
    </source>
</evidence>
<evidence type="ECO:0000269" key="9">
    <source>
    </source>
</evidence>
<evidence type="ECO:0000269" key="10">
    <source>
    </source>
</evidence>
<evidence type="ECO:0000269" key="11">
    <source>
    </source>
</evidence>
<evidence type="ECO:0000269" key="12">
    <source>
    </source>
</evidence>
<evidence type="ECO:0000269" key="13">
    <source>
    </source>
</evidence>
<evidence type="ECO:0000269" key="14">
    <source>
    </source>
</evidence>
<evidence type="ECO:0000269" key="15">
    <source>
    </source>
</evidence>
<evidence type="ECO:0000269" key="16">
    <source>
    </source>
</evidence>
<evidence type="ECO:0000269" key="17">
    <source>
    </source>
</evidence>
<evidence type="ECO:0000269" key="18">
    <source>
    </source>
</evidence>
<evidence type="ECO:0000269" key="19">
    <source>
    </source>
</evidence>
<evidence type="ECO:0000269" key="20">
    <source>
    </source>
</evidence>
<evidence type="ECO:0000269" key="21">
    <source>
    </source>
</evidence>
<evidence type="ECO:0000269" key="22">
    <source>
    </source>
</evidence>
<evidence type="ECO:0000269" key="23">
    <source>
    </source>
</evidence>
<evidence type="ECO:0000269" key="24">
    <source>
    </source>
</evidence>
<evidence type="ECO:0000269" key="25">
    <source>
    </source>
</evidence>
<evidence type="ECO:0000269" key="26">
    <source>
    </source>
</evidence>
<evidence type="ECO:0000305" key="27"/>
<evidence type="ECO:0007829" key="28">
    <source>
        <dbReference type="PDB" id="5NAZ"/>
    </source>
</evidence>
<evidence type="ECO:0007829" key="29">
    <source>
        <dbReference type="PDB" id="6WKU"/>
    </source>
</evidence>
<protein>
    <recommendedName>
        <fullName>Collagen alpha-5(IV) chain</fullName>
    </recommendedName>
</protein>
<feature type="signal peptide" evidence="2">
    <location>
        <begin position="1"/>
        <end position="26"/>
    </location>
</feature>
<feature type="chain" id="PRO_0000005852" description="Collagen alpha-5(IV) chain">
    <location>
        <begin position="27"/>
        <end position="1685"/>
    </location>
</feature>
<feature type="domain" description="Collagen IV NC1" evidence="3">
    <location>
        <begin position="1461"/>
        <end position="1685"/>
    </location>
</feature>
<feature type="region of interest" description="Nonhelical region (NC2)">
    <location>
        <begin position="27"/>
        <end position="41"/>
    </location>
</feature>
<feature type="region of interest" description="Triple-helical region">
    <location>
        <begin position="42"/>
        <end position="1456"/>
    </location>
</feature>
<feature type="region of interest" description="Disordered" evidence="4">
    <location>
        <begin position="49"/>
        <end position="1459"/>
    </location>
</feature>
<feature type="compositionally biased region" description="Low complexity" evidence="4">
    <location>
        <begin position="52"/>
        <end position="61"/>
    </location>
</feature>
<feature type="compositionally biased region" description="Pro residues" evidence="4">
    <location>
        <begin position="62"/>
        <end position="73"/>
    </location>
</feature>
<feature type="compositionally biased region" description="Pro residues" evidence="4">
    <location>
        <begin position="188"/>
        <end position="212"/>
    </location>
</feature>
<feature type="compositionally biased region" description="Low complexity" evidence="4">
    <location>
        <begin position="214"/>
        <end position="225"/>
    </location>
</feature>
<feature type="compositionally biased region" description="Basic and acidic residues" evidence="4">
    <location>
        <begin position="246"/>
        <end position="257"/>
    </location>
</feature>
<feature type="compositionally biased region" description="Pro residues" evidence="4">
    <location>
        <begin position="266"/>
        <end position="281"/>
    </location>
</feature>
<feature type="compositionally biased region" description="Basic and acidic residues" evidence="4">
    <location>
        <begin position="284"/>
        <end position="305"/>
    </location>
</feature>
<feature type="compositionally biased region" description="Basic and acidic residues" evidence="4">
    <location>
        <begin position="324"/>
        <end position="333"/>
    </location>
</feature>
<feature type="compositionally biased region" description="Low complexity" evidence="4">
    <location>
        <begin position="413"/>
        <end position="430"/>
    </location>
</feature>
<feature type="compositionally biased region" description="Pro residues" evidence="4">
    <location>
        <begin position="431"/>
        <end position="445"/>
    </location>
</feature>
<feature type="compositionally biased region" description="Pro residues" evidence="4">
    <location>
        <begin position="493"/>
        <end position="505"/>
    </location>
</feature>
<feature type="compositionally biased region" description="Pro residues" evidence="4">
    <location>
        <begin position="620"/>
        <end position="630"/>
    </location>
</feature>
<feature type="compositionally biased region" description="Pro residues" evidence="4">
    <location>
        <begin position="709"/>
        <end position="727"/>
    </location>
</feature>
<feature type="compositionally biased region" description="Low complexity" evidence="4">
    <location>
        <begin position="788"/>
        <end position="797"/>
    </location>
</feature>
<feature type="compositionally biased region" description="Pro residues" evidence="4">
    <location>
        <begin position="848"/>
        <end position="859"/>
    </location>
</feature>
<feature type="compositionally biased region" description="Pro residues" evidence="4">
    <location>
        <begin position="868"/>
        <end position="880"/>
    </location>
</feature>
<feature type="compositionally biased region" description="Low complexity" evidence="4">
    <location>
        <begin position="882"/>
        <end position="901"/>
    </location>
</feature>
<feature type="compositionally biased region" description="Low complexity" evidence="4">
    <location>
        <begin position="912"/>
        <end position="931"/>
    </location>
</feature>
<feature type="compositionally biased region" description="Low complexity" evidence="4">
    <location>
        <begin position="983"/>
        <end position="999"/>
    </location>
</feature>
<feature type="compositionally biased region" description="Low complexity" evidence="4">
    <location>
        <begin position="1010"/>
        <end position="1026"/>
    </location>
</feature>
<feature type="compositionally biased region" description="Low complexity" evidence="4">
    <location>
        <begin position="1111"/>
        <end position="1120"/>
    </location>
</feature>
<feature type="compositionally biased region" description="Pro residues" evidence="4">
    <location>
        <begin position="1139"/>
        <end position="1148"/>
    </location>
</feature>
<feature type="compositionally biased region" description="Gly residues" evidence="4">
    <location>
        <begin position="1149"/>
        <end position="1158"/>
    </location>
</feature>
<feature type="compositionally biased region" description="Gly residues" evidence="4">
    <location>
        <begin position="1202"/>
        <end position="1211"/>
    </location>
</feature>
<feature type="compositionally biased region" description="Pro residues" evidence="4">
    <location>
        <begin position="1234"/>
        <end position="1243"/>
    </location>
</feature>
<feature type="compositionally biased region" description="Pro residues" evidence="4">
    <location>
        <begin position="1256"/>
        <end position="1274"/>
    </location>
</feature>
<feature type="compositionally biased region" description="Low complexity" evidence="4">
    <location>
        <begin position="1295"/>
        <end position="1308"/>
    </location>
</feature>
<feature type="compositionally biased region" description="Pro residues" evidence="4">
    <location>
        <begin position="1353"/>
        <end position="1362"/>
    </location>
</feature>
<feature type="glycosylation site" description="N-linked (GlcNAc...) asparagine" evidence="2">
    <location>
        <position position="125"/>
    </location>
</feature>
<feature type="disulfide bond" description="Interchain" evidence="3">
    <location>
        <position position="451"/>
    </location>
</feature>
<feature type="disulfide bond" description="Interchain" evidence="3">
    <location>
        <position position="481"/>
    </location>
</feature>
<feature type="disulfide bond" description="Interchain" evidence="3">
    <location>
        <position position="484"/>
    </location>
</feature>
<feature type="disulfide bond" description="Or C-1476 with C-1564" evidence="3">
    <location>
        <begin position="1476"/>
        <end position="1567"/>
    </location>
</feature>
<feature type="disulfide bond" description="Or C-1509 with C-1567" evidence="3">
    <location>
        <begin position="1509"/>
        <end position="1564"/>
    </location>
</feature>
<feature type="disulfide bond" evidence="3">
    <location>
        <begin position="1521"/>
        <end position="1527"/>
    </location>
</feature>
<feature type="disulfide bond" description="Or C-1586 with C-1678" evidence="3">
    <location>
        <begin position="1586"/>
        <end position="1681"/>
    </location>
</feature>
<feature type="disulfide bond" description="Or C-1620 with C-1681" evidence="3">
    <location>
        <begin position="1620"/>
        <end position="1678"/>
    </location>
</feature>
<feature type="disulfide bond" evidence="3">
    <location>
        <begin position="1632"/>
        <end position="1638"/>
    </location>
</feature>
<feature type="cross-link" description="S-Lysyl-methionine sulfilimine (Met-Lys) (interchain with K-1667)" evidence="1">
    <location>
        <position position="1549"/>
    </location>
</feature>
<feature type="cross-link" description="S-Lysyl-methionine sulfilimine (Lys-Met) (interchain with M-1549)" evidence="1">
    <location>
        <position position="1667"/>
    </location>
</feature>
<feature type="splice variant" id="VSP_001173" description="In isoform 2." evidence="27">
    <original>G</original>
    <variation>GPTGFQG</variation>
    <location>
        <position position="1264"/>
    </location>
</feature>
<feature type="sequence variant" id="VAR_001914" description="In ATS1; adult type; dbSNP:rs104886043.">
    <original>G</original>
    <variation>D</variation>
    <location>
        <position position="54"/>
    </location>
</feature>
<feature type="sequence variant" id="VAR_007991" description="In ATS1.">
    <original>G</original>
    <variation>S</variation>
    <location>
        <position position="114"/>
    </location>
</feature>
<feature type="sequence variant" id="VAR_071932" description="In ATS1; dbSNP:rs1569488429." evidence="16">
    <original>G</original>
    <variation>E</variation>
    <location>
        <position position="123"/>
    </location>
</feature>
<feature type="sequence variant" id="VAR_001915" description="In ATS1; juvenile type; dbSNP:rs281874723.">
    <original>G</original>
    <variation>E</variation>
    <location>
        <position position="129"/>
    </location>
</feature>
<feature type="sequence variant" id="VAR_001916" description="In ATS1; juvenile type; dbSNP:rs281874723.">
    <original>G</original>
    <variation>V</variation>
    <location>
        <position position="129"/>
    </location>
</feature>
<feature type="sequence variant" id="VAR_001917" description="In ATS1; dbSNP:rs104886055." evidence="25">
    <original>G</original>
    <variation>R</variation>
    <location>
        <position position="174"/>
    </location>
</feature>
<feature type="sequence variant" id="VAR_011220" description="In ATS1; presenting with dot-and-fleck retinopathy; dbSNP:rs104886056." evidence="10">
    <original>G</original>
    <variation>C</variation>
    <location>
        <position position="177"/>
    </location>
</feature>
<feature type="sequence variant" id="VAR_001918" description="In ATS1; adult type; dbSNP:rs104886056." evidence="25">
    <original>G</original>
    <variation>R</variation>
    <location>
        <position position="177"/>
    </location>
</feature>
<feature type="sequence variant" id="VAR_011221" description="In ATS1; dbSNP:rs104886060." evidence="11">
    <original>G</original>
    <variation>R</variation>
    <location>
        <position position="192"/>
    </location>
</feature>
<feature type="sequence variant" id="VAR_011222" description="In ATS1; juvenile type; dbSNP:rs104886063.">
    <original>G</original>
    <variation>V</variation>
    <location>
        <position position="204"/>
    </location>
</feature>
<feature type="sequence variant" id="VAR_001919" description="In ATS1; juvenile type; dbSNP:rs104886067." evidence="9">
    <original>G</original>
    <variation>R</variation>
    <location>
        <position position="216"/>
    </location>
</feature>
<feature type="sequence variant" id="VAR_001920" description="In ATS1; dbSNP:rs104886075.">
    <original>G</original>
    <variation>S</variation>
    <location>
        <position position="219"/>
    </location>
</feature>
<feature type="sequence variant" id="VAR_011223" description="In ATS1; juvenile type; dbSNP:rs104886076.">
    <original>G</original>
    <variation>R</variation>
    <location>
        <position position="230"/>
    </location>
</feature>
<feature type="sequence variant" id="VAR_011224" description="In ATS1; dbSNP:rs104886068.">
    <original>G</original>
    <variation>E</variation>
    <location>
        <position position="239"/>
    </location>
</feature>
<feature type="sequence variant" id="VAR_011225" description="In ATS1; adult type; dbSNP:rs104886069.">
    <original>G</original>
    <variation>R</variation>
    <location>
        <position position="264"/>
    </location>
</feature>
<feature type="sequence variant" id="VAR_001921" description="In ATS1; juvenile type; dbSNP:rs104886450.">
    <original>G</original>
    <variation>V</variation>
    <location>
        <position position="289"/>
    </location>
</feature>
<feature type="sequence variant" id="VAR_011226" description="In ATS1; dbSNP:rs104886073." evidence="11">
    <original>G</original>
    <variation>R</variation>
    <location>
        <position position="292"/>
    </location>
</feature>
<feature type="sequence variant" id="VAR_001922" description="In ATS1; juvenile type; dbSNP:rs104886078.">
    <original>G</original>
    <variation>V</variation>
    <location>
        <position position="292"/>
    </location>
</feature>
<feature type="sequence variant" id="VAR_011227" description="In ATS1; dbSNP:rs104886079." evidence="11">
    <original>G</original>
    <variation>D</variation>
    <location>
        <position position="295"/>
    </location>
</feature>
<feature type="sequence variant" id="VAR_011228" description="In ATS1; dbSNP:rs104886080.">
    <original>G</original>
    <variation>S</variation>
    <location>
        <position position="298"/>
    </location>
</feature>
<feature type="sequence variant" id="VAR_011229" description="In ATS1; juvenile type; dbSNP:rs104886085." evidence="8">
    <original>G</original>
    <variation>R</variation>
    <location>
        <position position="319"/>
    </location>
</feature>
<feature type="sequence variant" id="VAR_001923" description="In ATS1; dbSNP:rs104886091." evidence="13">
    <original>G</original>
    <variation>E</variation>
    <location>
        <position position="325"/>
    </location>
</feature>
<feature type="sequence variant" id="VAR_001924" description="In ATS1; juvenile and adult types; dbSNP:rs104886088." evidence="11 14 25">
    <original>G</original>
    <variation>R</variation>
    <location>
        <position position="325"/>
    </location>
</feature>
<feature type="sequence variant" id="VAR_007992" description="In ATS1; dbSNP:rs104886092.">
    <original>G</original>
    <variation>V</variation>
    <location>
        <position position="331"/>
    </location>
</feature>
<feature type="sequence variant" id="VAR_001926" description="In ATS1; juvenile type.">
    <location>
        <begin position="365"/>
        <end position="367"/>
    </location>
</feature>
<feature type="sequence variant" id="VAR_001925" description="In ATS1; juvenile type; dbSNP:rs104886096.">
    <original>G</original>
    <variation>E</variation>
    <location>
        <position position="365"/>
    </location>
</feature>
<feature type="sequence variant" id="VAR_001927" description="In ATS1; juvenile type; dbSNP:rs104886097.">
    <original>G</original>
    <variation>E</variation>
    <location>
        <position position="371"/>
    </location>
</feature>
<feature type="sequence variant" id="VAR_001928" description="In ATS1; dbSNP:rs104886108.">
    <original>G</original>
    <variation>A</variation>
    <location>
        <position position="374"/>
    </location>
</feature>
<feature type="sequence variant" id="VAR_001929" description="In ATS1; juvenile type; dbSNP:rs104886105.">
    <original>G</original>
    <variation>D</variation>
    <location>
        <position position="383"/>
    </location>
</feature>
<feature type="sequence variant" id="VAR_001930" description="In ATS1; adult type; dbSNP:rs104886107." evidence="17">
    <original>G</original>
    <variation>E</variation>
    <location>
        <position position="400"/>
    </location>
</feature>
<feature type="sequence variant" id="VAR_001931" description="In ATS1; adult type; dbSNP:rs104886100." evidence="17">
    <original>G</original>
    <variation>V</variation>
    <location>
        <position position="406"/>
    </location>
</feature>
<feature type="sequence variant" id="VAR_001932" description="In ATS1; dbSNP:rs104886101.">
    <original>G</original>
    <variation>D</variation>
    <location>
        <position position="409"/>
    </location>
</feature>
<feature type="sequence variant" id="VAR_011230" description="In ATS1; adult type; dbSNP:rs104886102.">
    <original>G</original>
    <variation>V</variation>
    <location>
        <position position="412"/>
    </location>
</feature>
<feature type="sequence variant" id="VAR_011231" description="In ATS1; dbSNP:rs104886103." evidence="9">
    <original>G</original>
    <variation>R</variation>
    <location>
        <position position="415"/>
    </location>
</feature>
<feature type="sequence variant" id="VAR_011232" description="In ATS1; juvenile type; dbSNP:rs281874663.">
    <original>G</original>
    <variation>E</variation>
    <location>
        <position position="420"/>
    </location>
</feature>
<feature type="sequence variant" id="VAR_011233" description="In ATS1; dbSNP:rs281874663." evidence="26">
    <original>G</original>
    <variation>V</variation>
    <location>
        <position position="420"/>
    </location>
</feature>
<feature type="sequence variant" id="VAR_011234" description="In ATS1; dbSNP:rs104886110.">
    <original>G</original>
    <variation>E</variation>
    <location>
        <position position="423"/>
    </location>
</feature>
<feature type="sequence variant" id="VAR_001933" description="In dbSNP:rs142883891." evidence="23">
    <original>A</original>
    <variation>D</variation>
    <location>
        <position position="430"/>
    </location>
</feature>
<feature type="sequence variant" id="VAR_001934" description="In dbSNP:rs2272946." evidence="6 11 23">
    <original>I</original>
    <variation>S</variation>
    <location>
        <position position="444"/>
    </location>
</feature>
<feature type="sequence variant" id="VAR_001935" description="In ATS1." evidence="26">
    <location>
        <begin position="456"/>
        <end position="458"/>
    </location>
</feature>
<feature type="sequence variant" id="VAR_001936" description="In ATS1; dbSNP:rs104886114.">
    <original>G</original>
    <variation>E</variation>
    <location>
        <position position="466"/>
    </location>
</feature>
<feature type="sequence variant" id="VAR_007993" description="In ATS1; dbSNP:rs104886116.">
    <original>G</original>
    <variation>R</variation>
    <location>
        <position position="472"/>
    </location>
</feature>
<feature type="sequence variant" id="VAR_011235" description="In ATS1; juvenile type; dbSNP:rs104886117.">
    <original>G</original>
    <variation>E</variation>
    <location>
        <position position="491"/>
    </location>
</feature>
<feature type="sequence variant" id="VAR_001937" description="In ATS1; adult type; dbSNP:rs104886118.">
    <original>G</original>
    <variation>D</variation>
    <location>
        <position position="494"/>
    </location>
</feature>
<feature type="sequence variant" id="VAR_001938" description="In ATS1; juvenile type.">
    <location>
        <begin position="496"/>
        <end position="507"/>
    </location>
</feature>
<feature type="sequence variant" id="VAR_011236" description="In ATS1; adult type; dbSNP:rs104886120.">
    <original>G</original>
    <variation>C</variation>
    <location>
        <position position="497"/>
    </location>
</feature>
<feature type="sequence variant" id="VAR_001939" description="In ATS1; dbSNP:rs104886121." evidence="12">
    <original>G</original>
    <variation>C</variation>
    <location>
        <position position="521"/>
    </location>
</feature>
<feature type="sequence variant" id="VAR_001940" description="In ATS1; dbSNP:rs104886121.">
    <original>G</original>
    <variation>S</variation>
    <location>
        <position position="521"/>
    </location>
</feature>
<feature type="sequence variant" id="VAR_011237" description="In ATS1; adult type; dbSNP:rs104886119.">
    <original>G</original>
    <variation>D</variation>
    <location>
        <position position="524"/>
    </location>
</feature>
<feature type="sequence variant" id="VAR_007994" description="In ATS1; dbSNP:rs104886126.">
    <original>G</original>
    <variation>R</variation>
    <location>
        <position position="545"/>
    </location>
</feature>
<feature type="sequence variant" id="VAR_007995" description="In ATS1; dbSNP:rs104886127.">
    <original>G</original>
    <variation>V</variation>
    <location>
        <position position="545"/>
    </location>
</feature>
<feature type="sequence variant" id="VAR_011238" description="In ATS1; dbSNP:rs104886129." evidence="11">
    <original>G</original>
    <variation>R</variation>
    <location>
        <position position="558"/>
    </location>
</feature>
<feature type="sequence variant" id="VAR_007996" description="In ATS1; dbSNP:rs104886136.">
    <original>G</original>
    <variation>R</variation>
    <location>
        <position position="561"/>
    </location>
</feature>
<feature type="sequence variant" id="VAR_001941" description="In ATS1; juvenile type; dbSNP:rs104886137.">
    <original>G</original>
    <variation>A</variation>
    <location>
        <position position="567"/>
    </location>
</feature>
<feature type="sequence variant" id="VAR_011239" description="In ATS1; dbSNP:rs104886138." evidence="26">
    <original>G</original>
    <variation>D</variation>
    <location>
        <position position="573"/>
    </location>
</feature>
<feature type="sequence variant" id="VAR_011240" description="In ATS1; dbSNP:rs104886130." evidence="6">
    <original>G</original>
    <variation>E</variation>
    <location>
        <position position="579"/>
    </location>
</feature>
<feature type="sequence variant" id="VAR_007997" description="In ATS1; adult type; dbSNP:rs104886139.">
    <original>G</original>
    <variation>R</variation>
    <location>
        <position position="579"/>
    </location>
</feature>
<feature type="sequence variant" id="VAR_011241" description="In ATS1; dbSNP:rs104886133." evidence="11">
    <original>G</original>
    <variation>V</variation>
    <location>
        <position position="603"/>
    </location>
</feature>
<feature type="sequence variant" id="VAR_011242" description="In ATS1; juvenile type; dbSNP:rs104886135.">
    <original>G</original>
    <variation>R</variation>
    <location>
        <position position="609"/>
    </location>
</feature>
<feature type="sequence variant" id="VAR_001942" description="In ATS1; juvenile type; dbSNP:rs104886140.">
    <original>G</original>
    <variation>V</variation>
    <location>
        <position position="609"/>
    </location>
</feature>
<feature type="sequence variant" id="VAR_011243" description="In dbSNP:rs1569494314." evidence="23">
    <original>P</original>
    <variation>S</variation>
    <location>
        <position position="619"/>
    </location>
</feature>
<feature type="sequence variant" id="VAR_011244" description="In ATS1; dbSNP:rs104886141.">
    <original>G</original>
    <variation>C</variation>
    <location>
        <position position="621"/>
    </location>
</feature>
<feature type="sequence variant" id="VAR_011245" description="In ATS1; dbSNP:rs104886142." evidence="11 26">
    <original>G</original>
    <variation>D</variation>
    <location>
        <position position="624"/>
    </location>
</feature>
<feature type="sequence variant" id="VAR_011246" description="In ATS1; dbSNP:rs104886144." evidence="11">
    <original>G</original>
    <variation>D</variation>
    <location>
        <position position="629"/>
    </location>
</feature>
<feature type="sequence variant" id="VAR_011247" description="In ATS1; dbSNP:rs104886145.">
    <original>G</original>
    <variation>D</variation>
    <location>
        <position position="632"/>
    </location>
</feature>
<feature type="sequence variant" id="VAR_011248" description="In ATS1; dbSNP:rs104886146." evidence="6">
    <original>E</original>
    <variation>K</variation>
    <location>
        <position position="633"/>
    </location>
</feature>
<feature type="sequence variant" id="VAR_007998" description="In ATS1; dbSNP:rs281874683." evidence="26">
    <original>G</original>
    <variation>D</variation>
    <location>
        <position position="635"/>
    </location>
</feature>
<feature type="sequence variant" id="VAR_001944" description="In ATS1; dbSNP:rs104886134." evidence="17">
    <original>G</original>
    <variation>A</variation>
    <location>
        <position position="638"/>
    </location>
</feature>
<feature type="sequence variant" id="VAR_007999" description="In ATS1; juvenile type; dbSNP:rs104886147.">
    <original>G</original>
    <variation>S</variation>
    <location>
        <position position="638"/>
    </location>
</feature>
<feature type="sequence variant" id="VAR_001943" description="In ATS1; dbSNP:rs104886134." evidence="17">
    <original>G</original>
    <variation>V</variation>
    <location>
        <position position="638"/>
    </location>
</feature>
<feature type="sequence variant" id="VAR_001945" description="In ATS1; juvenile type; dbSNP:rs104886150." evidence="17">
    <original>G</original>
    <variation>R</variation>
    <location>
        <position position="653"/>
    </location>
</feature>
<feature type="sequence variant" id="VAR_001946" description="In dbSNP:rs34077552." evidence="23">
    <original>K</original>
    <variation>N</variation>
    <location>
        <position position="664"/>
    </location>
</feature>
<feature type="sequence variant" id="VAR_008000" description="In ATS1; juvenile type; dbSNP:rs104886151.">
    <original>G</original>
    <variation>A</variation>
    <location>
        <position position="669"/>
    </location>
</feature>
<feature type="sequence variant" id="VAR_011249" description="In ATS1; dbSNP:rs104886158.">
    <original>G</original>
    <variation>D</variation>
    <location>
        <position position="681"/>
    </location>
</feature>
<feature type="sequence variant" id="VAR_001947" description="In ATS1; adult type; dbSNP:rs104886160.">
    <original>G</original>
    <variation>V</variation>
    <location>
        <position position="684"/>
    </location>
</feature>
<feature type="sequence variant" id="VAR_008001" description="In ATS1; dbSNP:rs104886168.">
    <original>G</original>
    <variation>E</variation>
    <location>
        <position position="687"/>
    </location>
</feature>
<feature type="sequence variant" id="VAR_011250" description="In ATS1; dbSNP:rs104886163." evidence="11">
    <original>G</original>
    <variation>E</variation>
    <location>
        <position position="722"/>
    </location>
</feature>
<feature type="sequence variant" id="VAR_011251" description="In dbSNP:rs104886164." evidence="6">
    <original>P</original>
    <variation>A</variation>
    <location>
        <position position="739"/>
    </location>
</feature>
<feature type="sequence variant" id="VAR_011252" description="In ATS1; juvenile type; dbSNP:rs104886164." evidence="8">
    <original>P</original>
    <variation>S</variation>
    <location>
        <position position="739"/>
    </location>
</feature>
<feature type="sequence variant" id="VAR_001948" description="In ATS1; juvenile type; dbSNP:rs104886165.">
    <original>G</original>
    <variation>E</variation>
    <location>
        <position position="740"/>
    </location>
</feature>
<feature type="sequence variant" id="VAR_008002" description="In ATS1; dbSNP:rs104886166.">
    <original>G</original>
    <variation>D</variation>
    <location>
        <position position="743"/>
    </location>
</feature>
<feature type="sequence variant" id="VAR_001949" description="In ATS1; juvenile type; dbSNP:rs104886173.">
    <original>G</original>
    <variation>D</variation>
    <location>
        <position position="772"/>
    </location>
</feature>
<feature type="sequence variant" id="VAR_001950" description="In ATS1; dbSNP:rs104886177." evidence="17">
    <original>G</original>
    <variation>R</variation>
    <location>
        <position position="796"/>
    </location>
</feature>
<feature type="sequence variant" id="VAR_011254" description="In ATS1." evidence="26">
    <location>
        <begin position="802"/>
        <end position="807"/>
    </location>
</feature>
<feature type="sequence variant" id="VAR_011253" description="In ATS1; dbSNP:rs104886179.">
    <original>G</original>
    <variation>R</variation>
    <location>
        <position position="802"/>
    </location>
</feature>
<feature type="sequence variant" id="VAR_008003" description="In ATS1; adult type; dbSNP:rs104886180.">
    <original>G</original>
    <variation>E</variation>
    <location>
        <position position="808"/>
    </location>
</feature>
<feature type="sequence variant" id="VAR_011255" description="In ATS1; juvenile type; dbSNP:rs104886183.">
    <original>G</original>
    <variation>V</variation>
    <location>
        <position position="811"/>
    </location>
</feature>
<feature type="sequence variant" id="VAR_008004" description="In ATS1.">
    <location>
        <begin position="822"/>
        <end position="824"/>
    </location>
</feature>
<feature type="sequence variant" id="VAR_011256" description="In ATS1; dbSNP:rs104886184." evidence="7">
    <original>G</original>
    <variation>R</variation>
    <location>
        <position position="822"/>
    </location>
</feature>
<feature type="sequence variant" id="VAR_008005" description="In ATS1; juvenile type; dbSNP:rs104886187.">
    <original>G</original>
    <variation>E</variation>
    <location>
        <position position="852"/>
    </location>
</feature>
<feature type="sequence variant" id="VAR_001951" description="In ATS1; dbSNP:rs104886186.">
    <original>G</original>
    <variation>R</variation>
    <location>
        <position position="852"/>
    </location>
</feature>
<feature type="sequence variant" id="VAR_011257" description="In ATS1." evidence="9">
    <location>
        <begin position="864"/>
        <end position="875"/>
    </location>
</feature>
<feature type="sequence variant" id="VAR_001952" description="In ATS1; adult type; dbSNP:rs104886188.">
    <original>G</original>
    <variation>E</variation>
    <location>
        <position position="866"/>
    </location>
</feature>
<feature type="sequence variant" id="VAR_001953" description="In ATS1; juvenile type; dbSNP:rs104886189." evidence="17 26">
    <original>G</original>
    <variation>R</variation>
    <location>
        <position position="869"/>
    </location>
</feature>
<feature type="sequence variant" id="VAR_001954" description="In ATS1; dbSNP:rs104886190." evidence="17">
    <original>G</original>
    <variation>R</variation>
    <location>
        <position position="872"/>
    </location>
</feature>
<feature type="sequence variant" id="VAR_008006" description="In ATS1.">
    <original>G</original>
    <variation>R</variation>
    <location>
        <position position="878"/>
    </location>
</feature>
<feature type="sequence variant" id="VAR_011258" description="In ATS1; mild phenotype; dbSNP:rs104886192." evidence="11">
    <original>M</original>
    <variation>V</variation>
    <location>
        <position position="898"/>
    </location>
</feature>
<feature type="sequence variant" id="VAR_011259" description="In ATS1; juvenile type; dbSNP:rs104886361." evidence="8">
    <original>G</original>
    <variation>V</variation>
    <location>
        <position position="902"/>
    </location>
</feature>
<feature type="sequence variant" id="VAR_011260" description="In ATS1; dbSNP:rs104886363." evidence="8">
    <original>G</original>
    <variation>E</variation>
    <location>
        <position position="911"/>
    </location>
</feature>
<feature type="sequence variant" id="VAR_011261" description="In ATS1; dbSNP:rs104886196." evidence="26">
    <original>G</original>
    <variation>C</variation>
    <location>
        <position position="941"/>
    </location>
</feature>
<feature type="sequence variant" id="VAR_001955" description="In ATS1.">
    <location>
        <position position="942"/>
    </location>
</feature>
<feature type="sequence variant" id="VAR_011262" description="In ATS1; dbSNP:rs104886370." evidence="6">
    <original>G</original>
    <variation>D</variation>
    <location>
        <position position="947"/>
    </location>
</feature>
<feature type="sequence variant" id="VAR_011263" description="In ATS1; found on the same allele as variant Glu-1211; dbSNP:rs78972735." evidence="6">
    <original>G</original>
    <variation>V</variation>
    <location>
        <position position="953"/>
    </location>
</feature>
<feature type="sequence variant" id="VAR_008007" description="In ATS1; adult type.">
    <location>
        <begin position="988"/>
        <end position="992"/>
    </location>
</feature>
<feature type="sequence variant" id="VAR_011264" description="In ATS1." evidence="11">
    <original>G</original>
    <variation>A</variation>
    <location>
        <position position="1006"/>
    </location>
</feature>
<feature type="sequence variant" id="VAR_011265" description="In ATS1; dbSNP:rs104886202." evidence="11">
    <original>G</original>
    <variation>V</variation>
    <location>
        <position position="1006"/>
    </location>
</feature>
<feature type="sequence variant" id="VAR_011266" description="In ATS1.">
    <original>G</original>
    <variation>E</variation>
    <location>
        <position position="1015"/>
    </location>
</feature>
<feature type="sequence variant" id="VAR_011267" description="In ATS1; dbSNP:rs104886211.">
    <original>G</original>
    <variation>V</variation>
    <location>
        <position position="1015"/>
    </location>
</feature>
<feature type="sequence variant" id="VAR_011268" description="In ATS1; dbSNP:rs104886210." evidence="26">
    <original>G</original>
    <variation>S</variation>
    <location>
        <position position="1030"/>
    </location>
</feature>
<feature type="sequence variant" id="VAR_011269" description="In ATS1; dbSNP:rs104886212.">
    <original>G</original>
    <variation>V</variation>
    <location>
        <position position="1036"/>
    </location>
</feature>
<feature type="sequence variant" id="VAR_011270" description="In ATS1; juvenile type; dbSNP:rs104886214.">
    <original>G</original>
    <variation>S</variation>
    <location>
        <position position="1039"/>
    </location>
</feature>
<feature type="sequence variant" id="VAR_011271" description="In ATS1; dbSNP:rs104886215." evidence="9">
    <original>G</original>
    <variation>E</variation>
    <location>
        <position position="1045"/>
    </location>
</feature>
<feature type="sequence variant" id="VAR_011272" description="In ATS1; dbSNP:rs104886219.">
    <original>G</original>
    <variation>R</variation>
    <location>
        <position position="1066"/>
    </location>
</feature>
<feature type="sequence variant" id="VAR_011273" description="In ATS1; dbSNP:rs104886219." evidence="26">
    <original>G</original>
    <variation>S</variation>
    <location>
        <position position="1066"/>
    </location>
</feature>
<feature type="sequence variant" id="VAR_011274" description="In ATS1; dbSNP:rs104886232." evidence="9">
    <original>G</original>
    <variation>D</variation>
    <location>
        <position position="1086"/>
    </location>
</feature>
<feature type="sequence variant" id="VAR_001956" description="In ATS1; dbSNP:rs104886224.">
    <original>G</original>
    <variation>V</variation>
    <location>
        <position position="1104"/>
    </location>
</feature>
<feature type="sequence variant" id="VAR_008008" description="In ATS1; dbSNP:rs104886225." evidence="6">
    <original>G</original>
    <variation>R</variation>
    <location>
        <position position="1107"/>
    </location>
</feature>
<feature type="sequence variant" id="VAR_001957" description="In ATS1; juvenile type; dbSNP:rs104886229." evidence="26">
    <original>G</original>
    <variation>D</variation>
    <location>
        <position position="1143"/>
    </location>
</feature>
<feature type="sequence variant" id="VAR_001958" description="In ATS1; adult type; dbSNP:rs104886228.">
    <original>G</original>
    <variation>S</variation>
    <location>
        <position position="1143"/>
    </location>
</feature>
<feature type="sequence variant" id="VAR_011275" description="In ATS1; dbSNP:rs104886389." evidence="6">
    <original>G</original>
    <variation>R</variation>
    <location>
        <position position="1158"/>
    </location>
</feature>
<feature type="sequence variant" id="VAR_008009" description="In ATS1; dbSNP:rs104886235.">
    <original>G</original>
    <variation>R</variation>
    <location>
        <position position="1161"/>
    </location>
</feature>
<feature type="sequence variant" id="VAR_011276" description="In ATS1; dbSNP:rs104886236." evidence="9">
    <original>G</original>
    <variation>S</variation>
    <location>
        <position position="1167"/>
    </location>
</feature>
<feature type="sequence variant" id="VAR_011277" description="In ATS1; dbSNP:rs104886237." evidence="6">
    <original>G</original>
    <variation>S</variation>
    <location>
        <position position="1170"/>
    </location>
</feature>
<feature type="sequence variant" id="VAR_001959" description="In ATS1; juvenile type; dbSNP:rs104886242.">
    <original>G</original>
    <variation>R</variation>
    <location>
        <position position="1182"/>
    </location>
</feature>
<feature type="sequence variant" id="VAR_011278" description="In ATS1; dbSNP:rs104886244." evidence="26">
    <original>G</original>
    <variation>R</variation>
    <location>
        <position position="1196"/>
    </location>
</feature>
<feature type="sequence variant" id="VAR_011279" description="In ATS1; juvenile type; dbSNP:rs104886245.">
    <original>G</original>
    <variation>C</variation>
    <location>
        <position position="1205"/>
    </location>
</feature>
<feature type="sequence variant" id="VAR_011280" description="In ATS1; found on the same allele as variant Val-953; dbSNP:rs104886247.">
    <original>G</original>
    <variation>E</variation>
    <location>
        <position position="1211"/>
    </location>
</feature>
<feature type="sequence variant" id="VAR_008010" description="In ATS1; dbSNP:rs104886246.">
    <original>G</original>
    <variation>R</variation>
    <location>
        <position position="1211"/>
    </location>
</feature>
<feature type="sequence variant" id="VAR_008011" description="In ATS1; dbSNP:rs104886251.">
    <original>G</original>
    <variation>D</variation>
    <location>
        <position position="1220"/>
    </location>
</feature>
<feature type="sequence variant" id="VAR_011281" description="In ATS1; adult type; dbSNP:rs104886253." evidence="8">
    <original>G</original>
    <variation>D</variation>
    <location>
        <position position="1229"/>
    </location>
</feature>
<feature type="sequence variant" id="VAR_001960" description="In ATS1; dbSNP:rs104886255." evidence="17">
    <original>G</original>
    <variation>C</variation>
    <location>
        <position position="1241"/>
    </location>
</feature>
<feature type="sequence variant" id="VAR_011282" description="In ATS1; dbSNP:rs104886261." evidence="11">
    <original>G</original>
    <variation>D</variation>
    <location>
        <position position="1244"/>
    </location>
</feature>
<feature type="sequence variant" id="VAR_011283" description="In ATS1; adult type; dbSNP:rs104886262.">
    <original>G</original>
    <variation>S</variation>
    <location>
        <position position="1252"/>
    </location>
</feature>
<feature type="sequence variant" id="VAR_011284" description="In ATS1; dbSNP:rs104886264." evidence="26">
    <original>G</original>
    <variation>E</variation>
    <location>
        <position position="1261"/>
    </location>
</feature>
<feature type="sequence variant" id="VAR_001961" description="In ATS1; dbSNP:rs104886257.">
    <original>G</original>
    <variation>S</variation>
    <location>
        <position position="1270"/>
    </location>
</feature>
<feature type="sequence variant" id="VAR_008012" description="In ATS1; dbSNP:rs104886266.">
    <original>G</original>
    <variation>S</variation>
    <location>
        <position position="1333"/>
    </location>
</feature>
<feature type="sequence variant" id="VAR_011285" description="In ATS1; dbSNP:rs104886267." evidence="26">
    <original>G</original>
    <variation>S</variation>
    <location>
        <position position="1357"/>
    </location>
</feature>
<feature type="sequence variant" id="VAR_001962" description="In ATS1; adult type; dbSNP:rs104886269.">
    <original>G</original>
    <variation>V</variation>
    <location>
        <position position="1379"/>
    </location>
</feature>
<feature type="sequence variant" id="VAR_001963" description="In ATS1; adult and juvenile types; dbSNP:rs104886270." evidence="25">
    <original>R</original>
    <variation>C</variation>
    <location>
        <position position="1410"/>
    </location>
</feature>
<feature type="sequence variant" id="VAR_001964" description="In ATS1; adult type; dbSNP:rs104886272." evidence="25">
    <original>G</original>
    <variation>W</variation>
    <location>
        <position position="1421"/>
    </location>
</feature>
<feature type="sequence variant" id="VAR_001965" description="In ATS1; juvenile type; dbSNP:rs144282156.">
    <original>R</original>
    <variation>C</variation>
    <location>
        <position position="1422"/>
    </location>
</feature>
<feature type="sequence variant" id="VAR_008013" description="In ATS1; adult type; dbSNP:rs104886274.">
    <original>G</original>
    <variation>V</variation>
    <location>
        <position position="1427"/>
    </location>
</feature>
<feature type="sequence variant" id="VAR_011286" description="In dbSNP:rs1569508163." evidence="23">
    <original>L</original>
    <variation>M</variation>
    <location>
        <position position="1428"/>
    </location>
</feature>
<feature type="sequence variant" id="VAR_008014" description="In ATS1; dbSNP:rs104886277.">
    <original>G</original>
    <variation>D</variation>
    <location>
        <position position="1442"/>
    </location>
</feature>
<feature type="sequence variant" id="VAR_001966" description="In ATS1; dbSNP:rs104886280.">
    <original>G</original>
    <variation>S</variation>
    <location>
        <position position="1451"/>
    </location>
</feature>
<feature type="sequence variant" id="VAR_008015" description="In ATS1; adult type; dbSNP:rs104886282.">
    <original>G</original>
    <variation>A</variation>
    <location>
        <position position="1486"/>
    </location>
</feature>
<feature type="sequence variant" id="VAR_011287" description="In ATS1; dbSNP:rs104886283.">
    <original>S</original>
    <variation>F</variation>
    <location>
        <position position="1488"/>
    </location>
</feature>
<feature type="sequence variant" id="VAR_001967" description="In ATS1; dbSNP:rs104886284." evidence="22">
    <original>A</original>
    <variation>D</variation>
    <location>
        <position position="1498"/>
    </location>
</feature>
<feature type="sequence variant" id="VAR_011288" description="In ATS1; uncertain significance; juvenile type; dbSNP:rs104886285." evidence="8">
    <original>R</original>
    <variation>H</variation>
    <location>
        <position position="1511"/>
    </location>
</feature>
<feature type="sequence variant" id="VAR_001968" description="In ATS1; juvenile type; dbSNP:rs201220208." evidence="19 25">
    <original>P</original>
    <variation>T</variation>
    <location>
        <position position="1517"/>
    </location>
</feature>
<feature type="sequence variant" id="VAR_001969" description="In ATS1; adult type; dbSNP:rs104886293." evidence="19">
    <original>W</original>
    <variation>S</variation>
    <location>
        <position position="1538"/>
    </location>
</feature>
<feature type="sequence variant" id="VAR_008016" description="In dbSNP:rs104886295.">
    <original>P</original>
    <variation>A</variation>
    <location>
        <position position="1559"/>
    </location>
</feature>
<feature type="sequence variant" id="VAR_001970" description="In ATS1; dbSNP:rs281874743." evidence="19">
    <original>R</original>
    <variation>Q</variation>
    <location>
        <position position="1563"/>
    </location>
</feature>
<feature type="sequence variant" id="VAR_001971" description="In ATS1; adult type; dbSNP:rs104886287." evidence="15">
    <original>C</original>
    <variation>S</variation>
    <location>
        <position position="1564"/>
    </location>
</feature>
<feature type="sequence variant" id="VAR_011289" description="In ATS1; juvenile type; dbSNP:rs104886288.">
    <original>C</original>
    <variation>R</variation>
    <location>
        <position position="1567"/>
    </location>
</feature>
<feature type="sequence variant" id="VAR_001972" description="In ATS1; dbSNP:rs104886297." evidence="25">
    <original>G</original>
    <variation>D</variation>
    <location>
        <position position="1596"/>
    </location>
</feature>
<feature type="sequence variant" id="VAR_019594" description="In ATS1." evidence="18">
    <location>
        <begin position="1597"/>
        <end position="1685"/>
    </location>
</feature>
<feature type="sequence variant" id="VAR_001973" description="In ATS1; adult type; dbSNP:rs104886303." evidence="11 20 26">
    <original>L</original>
    <variation>R</variation>
    <location>
        <position position="1649"/>
    </location>
</feature>
<feature type="sequence variant" id="VAR_011290" description="In ATS1; dbSNP:rs104886308." evidence="11">
    <original>R</original>
    <variation>P</variation>
    <location>
        <position position="1677"/>
    </location>
</feature>
<feature type="sequence variant" id="VAR_001974" description="In ATS1; dbSNP:rs104886308." evidence="24">
    <original>R</original>
    <variation>Q</variation>
    <location>
        <position position="1677"/>
    </location>
</feature>
<feature type="sequence variant" id="VAR_011291" description="In ATS1; dbSNP:rs104886311." evidence="6">
    <original>C</original>
    <variation>W</variation>
    <location>
        <position position="1678"/>
    </location>
</feature>
<feature type="sequence variant" id="VAR_019595" description="In ATS1." evidence="18">
    <location>
        <begin position="1679"/>
        <end position="1685"/>
    </location>
</feature>
<feature type="sequence conflict" description="In Ref. 5; AAA99480." evidence="27" ref="5">
    <original>AG</original>
    <variation>GS</variation>
    <location>
        <begin position="440"/>
        <end position="441"/>
    </location>
</feature>
<feature type="sequence conflict" description="In Ref. 5; AAA99480." evidence="27" ref="5">
    <original>FGPP</original>
    <variation>LALQ</variation>
    <location>
        <begin position="625"/>
        <end position="628"/>
    </location>
</feature>
<feature type="sequence conflict" description="In Ref. 5; AAA99480." evidence="27" ref="5">
    <original>LP</original>
    <variation>FR</variation>
    <location>
        <begin position="667"/>
        <end position="668"/>
    </location>
</feature>
<feature type="sequence conflict" description="In Ref. 5; AAA99480." evidence="27" ref="5">
    <original>A</original>
    <variation>R</variation>
    <location>
        <position position="888"/>
    </location>
</feature>
<feature type="strand" evidence="29">
    <location>
        <begin position="1461"/>
        <end position="1467"/>
    </location>
</feature>
<feature type="strand" evidence="29">
    <location>
        <begin position="1469"/>
        <end position="1472"/>
    </location>
</feature>
<feature type="strand" evidence="29">
    <location>
        <begin position="1481"/>
        <end position="1494"/>
    </location>
</feature>
<feature type="strand" evidence="29">
    <location>
        <begin position="1497"/>
        <end position="1500"/>
    </location>
</feature>
<feature type="helix" evidence="29">
    <location>
        <begin position="1506"/>
        <end position="1508"/>
    </location>
</feature>
<feature type="strand" evidence="29">
    <location>
        <begin position="1509"/>
        <end position="1512"/>
    </location>
</feature>
<feature type="strand" evidence="29">
    <location>
        <begin position="1518"/>
        <end position="1521"/>
    </location>
</feature>
<feature type="turn" evidence="28">
    <location>
        <begin position="1523"/>
        <end position="1525"/>
    </location>
</feature>
<feature type="strand" evidence="29">
    <location>
        <begin position="1527"/>
        <end position="1530"/>
    </location>
</feature>
<feature type="strand" evidence="29">
    <location>
        <begin position="1535"/>
        <end position="1540"/>
    </location>
</feature>
<feature type="helix" evidence="29">
    <location>
        <begin position="1554"/>
        <end position="1560"/>
    </location>
</feature>
<feature type="strand" evidence="29">
    <location>
        <begin position="1563"/>
        <end position="1571"/>
    </location>
</feature>
<feature type="strand" evidence="29">
    <location>
        <begin position="1573"/>
        <end position="1577"/>
    </location>
</feature>
<feature type="strand" evidence="29">
    <location>
        <begin position="1579"/>
        <end position="1582"/>
    </location>
</feature>
<feature type="strand" evidence="29">
    <location>
        <begin position="1590"/>
        <end position="1603"/>
    </location>
</feature>
<feature type="helix" evidence="29">
    <location>
        <begin position="1605"/>
        <end position="1607"/>
    </location>
</feature>
<feature type="strand" evidence="29">
    <location>
        <begin position="1609"/>
        <end position="1611"/>
    </location>
</feature>
<feature type="helix" evidence="29">
    <location>
        <begin position="1617"/>
        <end position="1619"/>
    </location>
</feature>
<feature type="strand" evidence="29">
    <location>
        <begin position="1620"/>
        <end position="1623"/>
    </location>
</feature>
<feature type="strand" evidence="29">
    <location>
        <begin position="1629"/>
        <end position="1633"/>
    </location>
</feature>
<feature type="strand" evidence="29">
    <location>
        <begin position="1636"/>
        <end position="1639"/>
    </location>
</feature>
<feature type="strand" evidence="29">
    <location>
        <begin position="1645"/>
        <end position="1650"/>
    </location>
</feature>
<feature type="helix" evidence="29">
    <location>
        <begin position="1654"/>
        <end position="1656"/>
    </location>
</feature>
<feature type="strand" evidence="29">
    <location>
        <begin position="1657"/>
        <end position="1659"/>
    </location>
</feature>
<feature type="strand" evidence="29">
    <location>
        <begin position="1664"/>
        <end position="1666"/>
    </location>
</feature>
<feature type="helix" evidence="29">
    <location>
        <begin position="1668"/>
        <end position="1670"/>
    </location>
</feature>
<feature type="helix" evidence="29">
    <location>
        <begin position="1672"/>
        <end position="1674"/>
    </location>
</feature>
<feature type="strand" evidence="29">
    <location>
        <begin position="1677"/>
        <end position="1683"/>
    </location>
</feature>
<reference key="1">
    <citation type="journal article" date="1994" name="J. Biol. Chem.">
        <title>Structure of the human type IV collagen COL4A5 gene.</title>
        <authorList>
            <person name="Zhou J."/>
            <person name="Leinonen A."/>
            <person name="Tryggvason K."/>
        </authorList>
    </citation>
    <scope>NUCLEOTIDE SEQUENCE [GENOMIC DNA]</scope>
</reference>
<reference key="2">
    <citation type="journal article" date="2005" name="Nature">
        <title>The DNA sequence of the human X chromosome.</title>
        <authorList>
            <person name="Ross M.T."/>
            <person name="Grafham D.V."/>
            <person name="Coffey A.J."/>
            <person name="Scherer S."/>
            <person name="McLay K."/>
            <person name="Muzny D."/>
            <person name="Platzer M."/>
            <person name="Howell G.R."/>
            <person name="Burrows C."/>
            <person name="Bird C.P."/>
            <person name="Frankish A."/>
            <person name="Lovell F.L."/>
            <person name="Howe K.L."/>
            <person name="Ashurst J.L."/>
            <person name="Fulton R.S."/>
            <person name="Sudbrak R."/>
            <person name="Wen G."/>
            <person name="Jones M.C."/>
            <person name="Hurles M.E."/>
            <person name="Andrews T.D."/>
            <person name="Scott C.E."/>
            <person name="Searle S."/>
            <person name="Ramser J."/>
            <person name="Whittaker A."/>
            <person name="Deadman R."/>
            <person name="Carter N.P."/>
            <person name="Hunt S.E."/>
            <person name="Chen R."/>
            <person name="Cree A."/>
            <person name="Gunaratne P."/>
            <person name="Havlak P."/>
            <person name="Hodgson A."/>
            <person name="Metzker M.L."/>
            <person name="Richards S."/>
            <person name="Scott G."/>
            <person name="Steffen D."/>
            <person name="Sodergren E."/>
            <person name="Wheeler D.A."/>
            <person name="Worley K.C."/>
            <person name="Ainscough R."/>
            <person name="Ambrose K.D."/>
            <person name="Ansari-Lari M.A."/>
            <person name="Aradhya S."/>
            <person name="Ashwell R.I."/>
            <person name="Babbage A.K."/>
            <person name="Bagguley C.L."/>
            <person name="Ballabio A."/>
            <person name="Banerjee R."/>
            <person name="Barker G.E."/>
            <person name="Barlow K.F."/>
            <person name="Barrett I.P."/>
            <person name="Bates K.N."/>
            <person name="Beare D.M."/>
            <person name="Beasley H."/>
            <person name="Beasley O."/>
            <person name="Beck A."/>
            <person name="Bethel G."/>
            <person name="Blechschmidt K."/>
            <person name="Brady N."/>
            <person name="Bray-Allen S."/>
            <person name="Bridgeman A.M."/>
            <person name="Brown A.J."/>
            <person name="Brown M.J."/>
            <person name="Bonnin D."/>
            <person name="Bruford E.A."/>
            <person name="Buhay C."/>
            <person name="Burch P."/>
            <person name="Burford D."/>
            <person name="Burgess J."/>
            <person name="Burrill W."/>
            <person name="Burton J."/>
            <person name="Bye J.M."/>
            <person name="Carder C."/>
            <person name="Carrel L."/>
            <person name="Chako J."/>
            <person name="Chapman J.C."/>
            <person name="Chavez D."/>
            <person name="Chen E."/>
            <person name="Chen G."/>
            <person name="Chen Y."/>
            <person name="Chen Z."/>
            <person name="Chinault C."/>
            <person name="Ciccodicola A."/>
            <person name="Clark S.Y."/>
            <person name="Clarke G."/>
            <person name="Clee C.M."/>
            <person name="Clegg S."/>
            <person name="Clerc-Blankenburg K."/>
            <person name="Clifford K."/>
            <person name="Cobley V."/>
            <person name="Cole C.G."/>
            <person name="Conquer J.S."/>
            <person name="Corby N."/>
            <person name="Connor R.E."/>
            <person name="David R."/>
            <person name="Davies J."/>
            <person name="Davis C."/>
            <person name="Davis J."/>
            <person name="Delgado O."/>
            <person name="Deshazo D."/>
            <person name="Dhami P."/>
            <person name="Ding Y."/>
            <person name="Dinh H."/>
            <person name="Dodsworth S."/>
            <person name="Draper H."/>
            <person name="Dugan-Rocha S."/>
            <person name="Dunham A."/>
            <person name="Dunn M."/>
            <person name="Durbin K.J."/>
            <person name="Dutta I."/>
            <person name="Eades T."/>
            <person name="Ellwood M."/>
            <person name="Emery-Cohen A."/>
            <person name="Errington H."/>
            <person name="Evans K.L."/>
            <person name="Faulkner L."/>
            <person name="Francis F."/>
            <person name="Frankland J."/>
            <person name="Fraser A.E."/>
            <person name="Galgoczy P."/>
            <person name="Gilbert J."/>
            <person name="Gill R."/>
            <person name="Gloeckner G."/>
            <person name="Gregory S.G."/>
            <person name="Gribble S."/>
            <person name="Griffiths C."/>
            <person name="Grocock R."/>
            <person name="Gu Y."/>
            <person name="Gwilliam R."/>
            <person name="Hamilton C."/>
            <person name="Hart E.A."/>
            <person name="Hawes A."/>
            <person name="Heath P.D."/>
            <person name="Heitmann K."/>
            <person name="Hennig S."/>
            <person name="Hernandez J."/>
            <person name="Hinzmann B."/>
            <person name="Ho S."/>
            <person name="Hoffs M."/>
            <person name="Howden P.J."/>
            <person name="Huckle E.J."/>
            <person name="Hume J."/>
            <person name="Hunt P.J."/>
            <person name="Hunt A.R."/>
            <person name="Isherwood J."/>
            <person name="Jacob L."/>
            <person name="Johnson D."/>
            <person name="Jones S."/>
            <person name="de Jong P.J."/>
            <person name="Joseph S.S."/>
            <person name="Keenan S."/>
            <person name="Kelly S."/>
            <person name="Kershaw J.K."/>
            <person name="Khan Z."/>
            <person name="Kioschis P."/>
            <person name="Klages S."/>
            <person name="Knights A.J."/>
            <person name="Kosiura A."/>
            <person name="Kovar-Smith C."/>
            <person name="Laird G.K."/>
            <person name="Langford C."/>
            <person name="Lawlor S."/>
            <person name="Leversha M."/>
            <person name="Lewis L."/>
            <person name="Liu W."/>
            <person name="Lloyd C."/>
            <person name="Lloyd D.M."/>
            <person name="Loulseged H."/>
            <person name="Loveland J.E."/>
            <person name="Lovell J.D."/>
            <person name="Lozado R."/>
            <person name="Lu J."/>
            <person name="Lyne R."/>
            <person name="Ma J."/>
            <person name="Maheshwari M."/>
            <person name="Matthews L.H."/>
            <person name="McDowall J."/>
            <person name="McLaren S."/>
            <person name="McMurray A."/>
            <person name="Meidl P."/>
            <person name="Meitinger T."/>
            <person name="Milne S."/>
            <person name="Miner G."/>
            <person name="Mistry S.L."/>
            <person name="Morgan M."/>
            <person name="Morris S."/>
            <person name="Mueller I."/>
            <person name="Mullikin J.C."/>
            <person name="Nguyen N."/>
            <person name="Nordsiek G."/>
            <person name="Nyakatura G."/>
            <person name="O'dell C.N."/>
            <person name="Okwuonu G."/>
            <person name="Palmer S."/>
            <person name="Pandian R."/>
            <person name="Parker D."/>
            <person name="Parrish J."/>
            <person name="Pasternak S."/>
            <person name="Patel D."/>
            <person name="Pearce A.V."/>
            <person name="Pearson D.M."/>
            <person name="Pelan S.E."/>
            <person name="Perez L."/>
            <person name="Porter K.M."/>
            <person name="Ramsey Y."/>
            <person name="Reichwald K."/>
            <person name="Rhodes S."/>
            <person name="Ridler K.A."/>
            <person name="Schlessinger D."/>
            <person name="Schueler M.G."/>
            <person name="Sehra H.K."/>
            <person name="Shaw-Smith C."/>
            <person name="Shen H."/>
            <person name="Sheridan E.M."/>
            <person name="Shownkeen R."/>
            <person name="Skuce C.D."/>
            <person name="Smith M.L."/>
            <person name="Sotheran E.C."/>
            <person name="Steingruber H.E."/>
            <person name="Steward C.A."/>
            <person name="Storey R."/>
            <person name="Swann R.M."/>
            <person name="Swarbreck D."/>
            <person name="Tabor P.E."/>
            <person name="Taudien S."/>
            <person name="Taylor T."/>
            <person name="Teague B."/>
            <person name="Thomas K."/>
            <person name="Thorpe A."/>
            <person name="Timms K."/>
            <person name="Tracey A."/>
            <person name="Trevanion S."/>
            <person name="Tromans A.C."/>
            <person name="d'Urso M."/>
            <person name="Verduzco D."/>
            <person name="Villasana D."/>
            <person name="Waldron L."/>
            <person name="Wall M."/>
            <person name="Wang Q."/>
            <person name="Warren J."/>
            <person name="Warry G.L."/>
            <person name="Wei X."/>
            <person name="West A."/>
            <person name="Whitehead S.L."/>
            <person name="Whiteley M.N."/>
            <person name="Wilkinson J.E."/>
            <person name="Willey D.L."/>
            <person name="Williams G."/>
            <person name="Williams L."/>
            <person name="Williamson A."/>
            <person name="Williamson H."/>
            <person name="Wilming L."/>
            <person name="Woodmansey R.L."/>
            <person name="Wray P.W."/>
            <person name="Yen J."/>
            <person name="Zhang J."/>
            <person name="Zhou J."/>
            <person name="Zoghbi H."/>
            <person name="Zorilla S."/>
            <person name="Buck D."/>
            <person name="Reinhardt R."/>
            <person name="Poustka A."/>
            <person name="Rosenthal A."/>
            <person name="Lehrach H."/>
            <person name="Meindl A."/>
            <person name="Minx P.J."/>
            <person name="Hillier L.W."/>
            <person name="Willard H.F."/>
            <person name="Wilson R.K."/>
            <person name="Waterston R.H."/>
            <person name="Rice C.M."/>
            <person name="Vaudin M."/>
            <person name="Coulson A."/>
            <person name="Nelson D.L."/>
            <person name="Weinstock G."/>
            <person name="Sulston J.E."/>
            <person name="Durbin R.M."/>
            <person name="Hubbard T."/>
            <person name="Gibbs R.A."/>
            <person name="Beck S."/>
            <person name="Rogers J."/>
            <person name="Bentley D.R."/>
        </authorList>
    </citation>
    <scope>NUCLEOTIDE SEQUENCE [LARGE SCALE GENOMIC DNA]</scope>
</reference>
<reference key="3">
    <citation type="submission" date="2005-09" db="EMBL/GenBank/DDBJ databases">
        <authorList>
            <person name="Mural R.J."/>
            <person name="Istrail S."/>
            <person name="Sutton G.G."/>
            <person name="Florea L."/>
            <person name="Halpern A.L."/>
            <person name="Mobarry C.M."/>
            <person name="Lippert R."/>
            <person name="Walenz B."/>
            <person name="Shatkay H."/>
            <person name="Dew I."/>
            <person name="Miller J.R."/>
            <person name="Flanigan M.J."/>
            <person name="Edwards N.J."/>
            <person name="Bolanos R."/>
            <person name="Fasulo D."/>
            <person name="Halldorsson B.V."/>
            <person name="Hannenhalli S."/>
            <person name="Turner R."/>
            <person name="Yooseph S."/>
            <person name="Lu F."/>
            <person name="Nusskern D.R."/>
            <person name="Shue B.C."/>
            <person name="Zheng X.H."/>
            <person name="Zhong F."/>
            <person name="Delcher A.L."/>
            <person name="Huson D.H."/>
            <person name="Kravitz S.A."/>
            <person name="Mouchard L."/>
            <person name="Reinert K."/>
            <person name="Remington K.A."/>
            <person name="Clark A.G."/>
            <person name="Waterman M.S."/>
            <person name="Eichler E.E."/>
            <person name="Adams M.D."/>
            <person name="Hunkapiller M.W."/>
            <person name="Myers E.W."/>
            <person name="Venter J.C."/>
        </authorList>
    </citation>
    <scope>NUCLEOTIDE SEQUENCE [LARGE SCALE GENOMIC DNA]</scope>
</reference>
<reference key="4">
    <citation type="journal article" date="1992" name="J. Biol. Chem.">
        <title>Complete amino acid sequence of the human alpha 5 (IV) collagen chain and identification of a single-base mutation in exon 23 converting glycine 521 in the collagenous domain to cysteine in an Alport syndrome patient.</title>
        <authorList>
            <person name="Zhou J."/>
            <person name="Hertz J.M."/>
            <person name="Leinonen A."/>
            <person name="Tryggvason K."/>
        </authorList>
    </citation>
    <scope>NUCLEOTIDE SEQUENCE OF 1-910</scope>
    <scope>VARIANT ATS1 CYS-521</scope>
    <source>
        <tissue>Kidney</tissue>
    </source>
</reference>
<reference key="5">
    <citation type="journal article" date="1990" name="J. Biol. Chem.">
        <title>Complete primary structure of the triple-helical region and the carboxyl-terminal domain of a new type IV collagen chain, alpha 5(IV).</title>
        <authorList>
            <person name="Pihlajaniemi T."/>
            <person name="Pohjolainen E.R."/>
            <person name="Myers J.C."/>
        </authorList>
    </citation>
    <scope>NUCLEOTIDE SEQUENCE [MRNA] OF 85-1685</scope>
    <source>
        <tissue>Placenta</tissue>
    </source>
</reference>
<reference key="6">
    <citation type="journal article" date="1991" name="Genomics">
        <title>Characterization of the 3' half of the human type IV collagen alpha 5 gene that is affected in the Alport syndrome.</title>
        <authorList>
            <person name="Zhou J."/>
            <person name="Hostikka S.L."/>
            <person name="Chow L.T."/>
            <person name="Tryggvason K."/>
        </authorList>
    </citation>
    <scope>NUCLEOTIDE SEQUENCE [GENOMIC DNA] OF 924-1685</scope>
</reference>
<reference key="7">
    <citation type="journal article" date="1990" name="Proc. Natl. Acad. Sci. U.S.A.">
        <title>Identification of a distinct type IV collagen alpha chain with restricted kidney distribution and assignment of its gene to the locus of X chromosome-linked Alport syndrome.</title>
        <authorList>
            <person name="Hostikka S.L."/>
            <person name="Eddy R.L."/>
            <person name="Byers M.G."/>
            <person name="Hoeyhtyae M."/>
            <person name="Shows T.B."/>
            <person name="Tryggvason K."/>
        </authorList>
    </citation>
    <scope>NUCLEOTIDE SEQUENCE [MRNA] OF 914-1685</scope>
</reference>
<reference key="8">
    <citation type="journal article" date="1990" name="Am. J. Hum. Genet.">
        <title>Molecular cloning of alpha 5(IV) collagen and assignment of the gene to the region of the X chromosome containing the Alport syndrome locus.</title>
        <authorList>
            <person name="Myers J.C."/>
            <person name="Jones T.A."/>
            <person name="Pohjolainen E.R."/>
            <person name="Kadri A.S."/>
            <person name="Goddard A.D."/>
            <person name="Sheer D."/>
            <person name="Solomon E."/>
            <person name="Pihlajaniemi T."/>
        </authorList>
    </citation>
    <scope>NUCLEOTIDE SEQUENCE OF 1442-1471</scope>
</reference>
<reference key="9">
    <citation type="submission" date="1994-09" db="EMBL/GenBank/DDBJ databases">
        <authorList>
            <person name="Guo C."/>
            <person name="van Damme B."/>
            <person name="Vanrenterghem Y."/>
            <person name="Devriendt K."/>
            <person name="Cassiman J.-J."/>
            <person name="Marynen P."/>
        </authorList>
    </citation>
    <scope>NUCLEOTIDE SEQUENCE OF 1-20</scope>
</reference>
<reference key="10">
    <citation type="journal article" date="1993" name="Kidney Int.">
        <title>Differential splicing of COL4A5 mRNA in kidney and white blood cells: a complex mutation in the COL4A5 gene of an Alport patient deletes the NC1 domain.</title>
        <authorList>
            <person name="Guo C."/>
            <person name="van Damme B."/>
            <person name="van Damme-Lombaerts R."/>
            <person name="van den Berghe H."/>
            <person name="Cassiman J.-J."/>
            <person name="Marynen P."/>
        </authorList>
    </citation>
    <scope>NUCLEOTIDE SEQUENCE OF 1258-1270 (ISOFORM 2)</scope>
</reference>
<reference key="11">
    <citation type="journal article" date="1994" name="Kidney Int.">
        <title>Mutations in the COL4A5 gene in Alport syndrome: a possible mutation in primordial germ cells.</title>
        <authorList>
            <person name="Nakazato H."/>
            <person name="Hattori S."/>
            <person name="Ushijima T."/>
            <person name="Matsuura T."/>
            <person name="Koitabashi Y."/>
            <person name="Takada T."/>
            <person name="Yoshioka K."/>
            <person name="Endo F."/>
            <person name="Matsuda I."/>
        </authorList>
    </citation>
    <scope>NUCLEOTIDE SEQUENCE [GENOMIC DNA] OF 1589-1598 AND 1677-1685</scope>
    <scope>VARIANTS ATS1 1597-TYR--THR-1685 DEL AND 1679-GLN--THR-1685 DEL</scope>
</reference>
<reference key="12">
    <citation type="journal article" date="1997" name="Hum. Mutat.">
        <title>The clinical spectrum of type IV collagen mutations.</title>
        <authorList>
            <person name="Lemmink H.H."/>
            <person name="Schroeder C.H."/>
            <person name="Monnens L.A.H."/>
            <person name="Smeets H.J.M."/>
        </authorList>
    </citation>
    <scope>REVIEW ON VARIANTS</scope>
</reference>
<reference key="13">
    <citation type="journal article" date="1991" name="Genomics">
        <title>Single base mutation in alpha 5(IV) collagen chain gene converting a conserved cysteine to serine in Alport syndrome.</title>
        <authorList>
            <person name="Zhou J."/>
            <person name="Barker D.F."/>
            <person name="Hostikka S.L."/>
            <person name="Gregory M.C."/>
            <person name="Atkin C.L."/>
            <person name="Tryggvason K."/>
        </authorList>
    </citation>
    <scope>VARIANT ATS1 SER-1564</scope>
</reference>
<reference key="14">
    <citation type="journal article" date="1992" name="Am. J. Hum. Genet.">
        <title>Substitution of arginine for glycine 325 in the collagen alpha 5 (IV) chain associated with X-linked Alport syndrome: characterization of the mutation by direct sequencing of PCR-amplified lymphoblast cDNA fragments.</title>
        <authorList>
            <person name="Knebelmann B."/>
            <person name="Deschenes G."/>
            <person name="Gros F."/>
            <person name="Hors M.-C."/>
            <person name="Gruenfeld J.-P."/>
            <person name="Tryggvason K."/>
            <person name="Gubler M.-C."/>
            <person name="Antignac C."/>
        </authorList>
    </citation>
    <scope>VARIANT ATS1 ARG-325</scope>
</reference>
<reference key="15">
    <citation type="journal article" date="1992" name="Hum. Mol. Genet.">
        <title>De novo mutation in the COL4A5 gene converting glycine 325 to glutamic acid in Alport syndrome.</title>
        <authorList>
            <person name="Renieri A."/>
            <person name="Seri M."/>
            <person name="Myers J.C."/>
            <person name="Pihlajaniemi T."/>
            <person name="Massella L."/>
            <person name="Rizzoni G.F."/>
            <person name="de Marchi M."/>
        </authorList>
    </citation>
    <scope>VARIANT ATS1 GLU-325</scope>
</reference>
<reference key="16">
    <citation type="journal article" date="1993" name="Genomics">
        <title>Identification of four novel mutations in the COL4A5 gene of patients with Alport syndrome.</title>
        <authorList>
            <person name="Lemmink H.L."/>
            <person name="Schroeder C.H."/>
            <person name="Brunner H.G."/>
            <person name="Nelen M.R."/>
            <person name="Zhou J."/>
            <person name="Tryggvason K."/>
            <person name="Haggsma-Schouten W.A.G."/>
            <person name="Roodvoets A.P."/>
            <person name="Rascher W."/>
            <person name="van Oost B.A."/>
            <person name="Smeets H.J.M."/>
        </authorList>
    </citation>
    <scope>VARIANTS ATS1 THR-1517; SER-1538 AND GLN-1563</scope>
</reference>
<reference key="17">
    <citation type="journal article" date="1993" name="Science">
        <title>Deletion of the paired alpha 5(IV) and alpha 6(IV) collagen genes in inherited smooth muscle tumors.</title>
        <authorList>
            <person name="Zhou J."/>
            <person name="Mochizuki T."/>
            <person name="Smeets H."/>
            <person name="Antignac C."/>
            <person name="Laurila P."/>
            <person name="de Paepe A."/>
            <person name="Tryggvason K."/>
            <person name="Reeders S.T."/>
        </authorList>
    </citation>
    <scope>INVOLVEMENT IN DL-ATS</scope>
</reference>
<reference key="18">
    <citation type="journal article" date="1995" name="Hum. Mutat.">
        <title>Detection of 12 novel mutations in the collagenous domain of the COL4A5 gene in Alport syndrome patients.</title>
        <authorList>
            <person name="Boye E."/>
            <person name="Flinter F."/>
            <person name="Zhou J."/>
            <person name="Tryggvason K."/>
            <person name="Bobrow M."/>
            <person name="Harris A."/>
        </authorList>
    </citation>
    <scope>VARIANTS ATS1 GLU-400; VAL-406; VAL-638; ALA-638; ARG-653; ARG-796; ARG-869; ARG-872 AND CYS-1241</scope>
</reference>
<reference key="19">
    <citation type="journal article" date="1996" name="Am. J. Hum. Genet.">
        <title>A mutation causing Alport syndrome with tardive hearing loss is common in the western United States.</title>
        <authorList>
            <person name="Barker D.F."/>
            <person name="Pruchno C.J."/>
            <person name="Jiang X."/>
            <person name="Atkin C.L."/>
            <person name="Stone E.M."/>
            <person name="Denison J.C."/>
            <person name="Fain P.R."/>
            <person name="Gregory M.C."/>
        </authorList>
    </citation>
    <scope>VARIANT ATS1 ARG-1649</scope>
</reference>
<reference key="20">
    <citation type="journal article" date="1996" name="Am. J. Hum. Genet.">
        <title>X-linked Alport syndrome: an SSCP-based mutation survey over all 51 exons of the COL4A5 gene.</title>
        <authorList>
            <person name="Renieri A."/>
            <person name="Bruttini M."/>
            <person name="Galli L."/>
            <person name="Zanelli P."/>
            <person name="Neri T.M."/>
            <person name="Rossetti S."/>
            <person name="Turco A.E."/>
            <person name="Heiskari N."/>
            <person name="Zhou J."/>
            <person name="Gusmano R."/>
            <person name="Massella L."/>
            <person name="Banfi G."/>
            <person name="Scolari F."/>
            <person name="Sessa A."/>
            <person name="Rizzoni G.F."/>
            <person name="Tryggvason K."/>
            <person name="Pignatti P.F."/>
            <person name="Savi M."/>
            <person name="Ballabio A."/>
            <person name="de Marchi M."/>
        </authorList>
    </citation>
    <scope>VARIANTS ATS1</scope>
</reference>
<reference key="21">
    <citation type="journal article" date="1996" name="Am. J. Hum. Genet.">
        <title>Spectrum of mutations in the COL4A5 collagen gene in X-linked Alport syndrome.</title>
        <authorList>
            <person name="Knebelmann B."/>
            <person name="Breillat C."/>
            <person name="Forestier L."/>
            <person name="Arrondel C."/>
            <person name="Jacassier D."/>
            <person name="Giatras I."/>
            <person name="Drouot L."/>
            <person name="Deschenes G."/>
            <person name="Gruenfeld J.-P."/>
            <person name="Broyer M."/>
            <person name="Gubler M.-C."/>
            <person name="Antignac C."/>
        </authorList>
    </citation>
    <scope>VARIANTS ATS1</scope>
    <scope>VARIANTS ASP-430; SER-444; SER-619; ASN-664 AND MET-1428</scope>
</reference>
<reference key="22">
    <citation type="journal article" date="1996" name="Hum. Mutat.">
        <title>Substitution of A1498D in noncollagen domain of a5(IV) collagen chain associated with adult-onset X-linked Alport syndrome.</title>
        <authorList>
            <person name="Tverskaya S."/>
            <person name="Bobrynina V."/>
            <person name="Tsalykova F."/>
            <person name="Ignatova M."/>
            <person name="Krasnopolskaya X."/>
            <person name="Evgrafov O."/>
        </authorList>
    </citation>
    <scope>VARIANT ATS1 ASP-1498</scope>
</reference>
<reference key="23">
    <citation type="journal article" date="1997" name="Hum. Genet.">
        <title>Common ancestry of three Ashkenazi-American families with Alport syndrome and COL4A5 R1677Q.</title>
        <authorList>
            <person name="Barker D.F."/>
            <person name="Denison J.C."/>
            <person name="Atkin C.L."/>
            <person name="Gregory M.C."/>
        </authorList>
    </citation>
    <scope>VARIANT ATS1 GLN-1677</scope>
</reference>
<reference key="24">
    <citation type="journal article" date="1998" name="Hum. Mutat. Suppl.">
        <title>Missense mutations in the COL4A5 gene in patients with X-linked Alport syndrome.</title>
        <authorList>
            <person name="Neri T.M."/>
            <person name="Zanelli P."/>
            <person name="de Palma G."/>
            <person name="Savi M."/>
            <person name="Rossetti S."/>
            <person name="Turco A.E."/>
            <person name="Pignatti G.F."/>
            <person name="Galli L."/>
            <person name="Bruttini M."/>
            <person name="Renieri A."/>
            <person name="Mingarelli R."/>
            <person name="Trivelli A."/>
            <person name="Pinciaroli A.R."/>
            <person name="Ragaiolo M."/>
            <person name="Rizzoni G.F."/>
            <person name="de Marchi M."/>
        </authorList>
    </citation>
    <scope>VARIANTS ATS1 ARG-174; ARG-177; ARG-325; CYS-1410; TRP-1421; THR-1517 AND ASP-1596</scope>
</reference>
<reference key="25">
    <citation type="journal article" date="1998" name="J. Am. Soc. Nephrol.">
        <title>High mutation detection rate in the COL4A5 collagen gene in suspected Alport syndrome using PCR and direct DNA sequencing.</title>
        <authorList>
            <person name="Martin P."/>
            <person name="Heiskari N."/>
            <person name="Zhou J."/>
            <person name="Leinonen A."/>
            <person name="Tumelius T."/>
            <person name="Hertz J.M."/>
            <person name="Barker D.F."/>
            <person name="Gregory M.C."/>
            <person name="Atkin C.L."/>
            <person name="Styrkarsdottir U."/>
            <person name="Neumann H."/>
            <person name="Springate J."/>
            <person name="Shows T.B."/>
            <person name="Pettersson E."/>
            <person name="Tryggvason K."/>
        </authorList>
    </citation>
    <scope>VARIANTS ATS1 VAL-420; 456-PRO--PRO-458 DEL; ASP-573; ASP-624; ASP-635; 802-GLY--PRO-807 DEL; ARG-869; CYS-941; SER-1030; SER-1066; ASP-1143; ARG-1196; GLU-1261; SER-1357 AND ARG-1649</scope>
</reference>
<reference key="26">
    <citation type="journal article" date="1999" name="Am. J. Kidney Dis.">
        <title>Detection of mutations in the COL4A5 gene in over 90% of male patients with X-linked Alport's syndrome by RT-PCR and direct sequencing.</title>
        <authorList>
            <person name="Inoue Y."/>
            <person name="Nishio H."/>
            <person name="Shirakawa T."/>
            <person name="Nakanishi K."/>
            <person name="Nakamura H."/>
            <person name="Sumino K."/>
            <person name="Nishiyama K."/>
            <person name="Iijima K."/>
            <person name="Yoshikawa N."/>
        </authorList>
    </citation>
    <scope>VARIANTS ATS1 GLU-579; LYS-633; ASP-947; VAL-953; ARG-1107; ARG-1158; SER-1170 AND TRP-1678</scope>
    <scope>VARIANTS SER-444 AND ALA-739</scope>
</reference>
<reference key="27">
    <citation type="journal article" date="1999" name="Clin. Genet.">
        <title>Three novel mutations in the COL4A5 gene in Mexican Alport syndrome patients.</title>
        <authorList>
            <person name="Cruz-Robles D."/>
            <person name="Garcia-Torres R."/>
            <person name="Antignac C."/>
            <person name="Forestier L."/>
            <person name="Garcia de la Puente S."/>
            <person name="Correa-Rotter R."/>
            <person name="Garcia-Lopez E."/>
            <person name="Orozco L."/>
        </authorList>
    </citation>
    <scope>VARIANT ATS1 ARG-822</scope>
</reference>
<reference key="28">
    <citation type="journal article" date="1999" name="Hum. Mutat.">
        <title>Detection of mutations in COL4A5 in patients with Alport syndrome.</title>
        <authorList>
            <person name="Plant K.E."/>
            <person name="Green P.M."/>
            <person name="Vetrie D."/>
            <person name="Flinter F.A."/>
        </authorList>
    </citation>
    <scope>VARIANTS ATS1</scope>
    <scope>VARIANTS</scope>
</reference>
<reference key="29">
    <citation type="journal article" date="2000" name="Am. J. Ophthalmol.">
        <title>Dot-and-fleck retinopathy in Alport syndrome caused by a novel mutation in the COL4A5 gene.</title>
        <authorList>
            <person name="Blasi M.A."/>
            <person name="Rinaldi R."/>
            <person name="Renieri A."/>
            <person name="Petrucci R."/>
            <person name="De Bernardo C."/>
            <person name="Bruttini M."/>
            <person name="Grammatico P."/>
        </authorList>
    </citation>
    <scope>VARIANT ATS1 CYS-177</scope>
</reference>
<reference key="30">
    <citation type="journal article" date="2000" name="Hum. Mutat.">
        <title>Spectrum of COL4A5 mutations in Finnish Alport syndrome patients.</title>
        <authorList>
            <person name="Martin P."/>
            <person name="Heiskari N."/>
            <person name="Pajari H."/>
            <person name="Groenhagen-Riska C."/>
            <person name="Kaeaeriaeinen H."/>
            <person name="Koskimies O."/>
            <person name="Tryggvason K."/>
        </authorList>
    </citation>
    <scope>VARIANTS ATS1 ARG-216; ARG-415; GLU-1045; ASP-1086; SER-1167 AND 864-SER--GLY-875 DEL</scope>
</reference>
<reference key="31">
    <citation type="journal article" date="2000" name="Pediatr. Nephrol.">
        <title>Mutational analysis of COL4A5 gene in Korean Alport syndrome.</title>
        <authorList>
            <person name="Cheong H.I."/>
            <person name="Park H.W."/>
            <person name="Ha I.S."/>
            <person name="Choi Y."/>
        </authorList>
    </citation>
    <scope>VARIANTS ATS1 ARG-319; SER-739; VAL-902; GLU-911; ASP-1229 AND HIS-1511</scope>
</reference>
<reference key="32">
    <citation type="journal article" date="2001" name="Am. J. Med. Genet.">
        <title>Efficient detection of Alport syndrome COL4A5 mutations with multiplex genomic PCR-SSCP.</title>
        <authorList>
            <person name="Barker D.F."/>
            <person name="Denison J.C."/>
            <person name="Atkin C.L."/>
            <person name="Gregory M.C."/>
        </authorList>
    </citation>
    <scope>VARIANTS ATS1 ARG-192; ARG-292; ASP-295; ARG-325; ARG-558; VAL-603; ASP-624; ASP-629; GLU-722; VAL-898; ALA-1006; VAL-1006; ASP-1244; ARG-1649 AND PRO-1677</scope>
    <scope>VARIANT SER-444</scope>
</reference>
<reference key="33">
    <citation type="journal article" date="2003" name="Am. J. Med. Genet. A">
        <title>Alport syndrome with diffuse leiomyomatosis.</title>
        <authorList>
            <person name="Anker M.C."/>
            <person name="Arnemann J."/>
            <person name="Neumann K."/>
            <person name="Ahrens P."/>
            <person name="Schmidt H."/>
            <person name="Koenig R."/>
        </authorList>
    </citation>
    <scope>INVOLVEMENT IN DL-ATS</scope>
</reference>
<reference key="34">
    <citation type="journal article" date="2014" name="Mol. Biol. Rep.">
        <title>Identification of a novel COL4A5 mutation in a Chinese family with X-linked Alport syndrome using exome sequencing.</title>
        <authorList>
            <person name="Guo Y."/>
            <person name="Yuan J."/>
            <person name="Liang H."/>
            <person name="Xiao J."/>
            <person name="Xu H."/>
            <person name="Yuan L."/>
            <person name="Gao K."/>
            <person name="Wu B."/>
            <person name="Tang Y."/>
            <person name="Li X."/>
            <person name="Deng H."/>
        </authorList>
    </citation>
    <scope>VARIANT ATS1 GLU-123</scope>
</reference>
<name>CO4A5_HUMAN</name>
<proteinExistence type="evidence at protein level"/>
<dbReference type="EMBL" id="M58526">
    <property type="protein sequence ID" value="AAA99480.1"/>
    <property type="molecule type" value="mRNA"/>
</dbReference>
<dbReference type="EMBL" id="AL034369">
    <property type="status" value="NOT_ANNOTATED_CDS"/>
    <property type="molecule type" value="Genomic_DNA"/>
</dbReference>
<dbReference type="EMBL" id="AL035425">
    <property type="status" value="NOT_ANNOTATED_CDS"/>
    <property type="molecule type" value="Genomic_DNA"/>
</dbReference>
<dbReference type="EMBL" id="AL031622">
    <property type="status" value="NOT_ANNOTATED_CDS"/>
    <property type="molecule type" value="Genomic_DNA"/>
</dbReference>
<dbReference type="EMBL" id="AL136364">
    <property type="status" value="NOT_ANNOTATED_CDS"/>
    <property type="molecule type" value="Genomic_DNA"/>
</dbReference>
<dbReference type="EMBL" id="CH471120">
    <property type="protein sequence ID" value="EAX02683.1"/>
    <property type="molecule type" value="Genomic_DNA"/>
</dbReference>
<dbReference type="EMBL" id="M90464">
    <property type="protein sequence ID" value="AAA52046.1"/>
    <property type="molecule type" value="mRNA"/>
</dbReference>
<dbReference type="EMBL" id="U04520">
    <property type="protein sequence ID" value="AAC27816.1"/>
    <property type="molecule type" value="Genomic_DNA"/>
</dbReference>
<dbReference type="EMBL" id="U04470">
    <property type="protein sequence ID" value="AAC27816.1"/>
    <property type="status" value="JOINED"/>
    <property type="molecule type" value="Genomic_DNA"/>
</dbReference>
<dbReference type="EMBL" id="U04471">
    <property type="protein sequence ID" value="AAC27816.1"/>
    <property type="status" value="JOINED"/>
    <property type="molecule type" value="Genomic_DNA"/>
</dbReference>
<dbReference type="EMBL" id="U04472">
    <property type="protein sequence ID" value="AAC27816.1"/>
    <property type="status" value="JOINED"/>
    <property type="molecule type" value="Genomic_DNA"/>
</dbReference>
<dbReference type="EMBL" id="U04473">
    <property type="protein sequence ID" value="AAC27816.1"/>
    <property type="status" value="JOINED"/>
    <property type="molecule type" value="Genomic_DNA"/>
</dbReference>
<dbReference type="EMBL" id="U04474">
    <property type="protein sequence ID" value="AAC27816.1"/>
    <property type="status" value="JOINED"/>
    <property type="molecule type" value="Genomic_DNA"/>
</dbReference>
<dbReference type="EMBL" id="U04476">
    <property type="protein sequence ID" value="AAC27816.1"/>
    <property type="status" value="JOINED"/>
    <property type="molecule type" value="Genomic_DNA"/>
</dbReference>
<dbReference type="EMBL" id="U04477">
    <property type="protein sequence ID" value="AAC27816.1"/>
    <property type="status" value="JOINED"/>
    <property type="molecule type" value="Genomic_DNA"/>
</dbReference>
<dbReference type="EMBL" id="U04478">
    <property type="protein sequence ID" value="AAC27816.1"/>
    <property type="status" value="JOINED"/>
    <property type="molecule type" value="Genomic_DNA"/>
</dbReference>
<dbReference type="EMBL" id="U04479">
    <property type="protein sequence ID" value="AAC27816.1"/>
    <property type="status" value="JOINED"/>
    <property type="molecule type" value="Genomic_DNA"/>
</dbReference>
<dbReference type="EMBL" id="U04480">
    <property type="protein sequence ID" value="AAC27816.1"/>
    <property type="status" value="JOINED"/>
    <property type="molecule type" value="Genomic_DNA"/>
</dbReference>
<dbReference type="EMBL" id="U04483">
    <property type="protein sequence ID" value="AAC27816.1"/>
    <property type="status" value="JOINED"/>
    <property type="molecule type" value="Genomic_DNA"/>
</dbReference>
<dbReference type="EMBL" id="U04485">
    <property type="protein sequence ID" value="AAC27816.1"/>
    <property type="status" value="JOINED"/>
    <property type="molecule type" value="Genomic_DNA"/>
</dbReference>
<dbReference type="EMBL" id="U04486">
    <property type="protein sequence ID" value="AAC27816.1"/>
    <property type="status" value="JOINED"/>
    <property type="molecule type" value="Genomic_DNA"/>
</dbReference>
<dbReference type="EMBL" id="U04487">
    <property type="protein sequence ID" value="AAC27816.1"/>
    <property type="status" value="JOINED"/>
    <property type="molecule type" value="Genomic_DNA"/>
</dbReference>
<dbReference type="EMBL" id="U04488">
    <property type="protein sequence ID" value="AAC27816.1"/>
    <property type="status" value="JOINED"/>
    <property type="molecule type" value="Genomic_DNA"/>
</dbReference>
<dbReference type="EMBL" id="U04489">
    <property type="protein sequence ID" value="AAC27816.1"/>
    <property type="status" value="JOINED"/>
    <property type="molecule type" value="Genomic_DNA"/>
</dbReference>
<dbReference type="EMBL" id="U04490">
    <property type="protein sequence ID" value="AAC27816.1"/>
    <property type="status" value="JOINED"/>
    <property type="molecule type" value="Genomic_DNA"/>
</dbReference>
<dbReference type="EMBL" id="U04491">
    <property type="protein sequence ID" value="AAC27816.1"/>
    <property type="status" value="JOINED"/>
    <property type="molecule type" value="Genomic_DNA"/>
</dbReference>
<dbReference type="EMBL" id="U04492">
    <property type="protein sequence ID" value="AAC27816.1"/>
    <property type="status" value="JOINED"/>
    <property type="molecule type" value="Genomic_DNA"/>
</dbReference>
<dbReference type="EMBL" id="U04493">
    <property type="protein sequence ID" value="AAC27816.1"/>
    <property type="status" value="JOINED"/>
    <property type="molecule type" value="Genomic_DNA"/>
</dbReference>
<dbReference type="EMBL" id="U04494">
    <property type="protein sequence ID" value="AAC27816.1"/>
    <property type="status" value="JOINED"/>
    <property type="molecule type" value="Genomic_DNA"/>
</dbReference>
<dbReference type="EMBL" id="U04495">
    <property type="protein sequence ID" value="AAC27816.1"/>
    <property type="status" value="JOINED"/>
    <property type="molecule type" value="Genomic_DNA"/>
</dbReference>
<dbReference type="EMBL" id="U04496">
    <property type="protein sequence ID" value="AAC27816.1"/>
    <property type="status" value="JOINED"/>
    <property type="molecule type" value="Genomic_DNA"/>
</dbReference>
<dbReference type="EMBL" id="U04497">
    <property type="protein sequence ID" value="AAC27816.1"/>
    <property type="status" value="JOINED"/>
    <property type="molecule type" value="Genomic_DNA"/>
</dbReference>
<dbReference type="EMBL" id="U04498">
    <property type="protein sequence ID" value="AAC27816.1"/>
    <property type="status" value="JOINED"/>
    <property type="molecule type" value="Genomic_DNA"/>
</dbReference>
<dbReference type="EMBL" id="U04499">
    <property type="protein sequence ID" value="AAC27816.1"/>
    <property type="status" value="JOINED"/>
    <property type="molecule type" value="Genomic_DNA"/>
</dbReference>
<dbReference type="EMBL" id="U04500">
    <property type="protein sequence ID" value="AAC27816.1"/>
    <property type="status" value="JOINED"/>
    <property type="molecule type" value="Genomic_DNA"/>
</dbReference>
<dbReference type="EMBL" id="U04501">
    <property type="protein sequence ID" value="AAC27816.1"/>
    <property type="status" value="JOINED"/>
    <property type="molecule type" value="Genomic_DNA"/>
</dbReference>
<dbReference type="EMBL" id="U04502">
    <property type="protein sequence ID" value="AAC27816.1"/>
    <property type="status" value="JOINED"/>
    <property type="molecule type" value="Genomic_DNA"/>
</dbReference>
<dbReference type="EMBL" id="U04503">
    <property type="protein sequence ID" value="AAC27816.1"/>
    <property type="status" value="JOINED"/>
    <property type="molecule type" value="Genomic_DNA"/>
</dbReference>
<dbReference type="EMBL" id="U04504">
    <property type="protein sequence ID" value="AAC27816.1"/>
    <property type="status" value="JOINED"/>
    <property type="molecule type" value="Genomic_DNA"/>
</dbReference>
<dbReference type="EMBL" id="U04505">
    <property type="protein sequence ID" value="AAC27816.1"/>
    <property type="status" value="JOINED"/>
    <property type="molecule type" value="Genomic_DNA"/>
</dbReference>
<dbReference type="EMBL" id="U04506">
    <property type="protein sequence ID" value="AAC27816.1"/>
    <property type="status" value="JOINED"/>
    <property type="molecule type" value="Genomic_DNA"/>
</dbReference>
<dbReference type="EMBL" id="U04507">
    <property type="protein sequence ID" value="AAC27816.1"/>
    <property type="status" value="JOINED"/>
    <property type="molecule type" value="Genomic_DNA"/>
</dbReference>
<dbReference type="EMBL" id="U04508">
    <property type="protein sequence ID" value="AAC27816.1"/>
    <property type="status" value="JOINED"/>
    <property type="molecule type" value="Genomic_DNA"/>
</dbReference>
<dbReference type="EMBL" id="U04509">
    <property type="protein sequence ID" value="AAC27816.1"/>
    <property type="status" value="JOINED"/>
    <property type="molecule type" value="Genomic_DNA"/>
</dbReference>
<dbReference type="EMBL" id="U04510">
    <property type="protein sequence ID" value="AAC27816.1"/>
    <property type="status" value="JOINED"/>
    <property type="molecule type" value="Genomic_DNA"/>
</dbReference>
<dbReference type="EMBL" id="U04511">
    <property type="protein sequence ID" value="AAC27816.1"/>
    <property type="status" value="JOINED"/>
    <property type="molecule type" value="Genomic_DNA"/>
</dbReference>
<dbReference type="EMBL" id="U04512">
    <property type="protein sequence ID" value="AAC27816.1"/>
    <property type="status" value="JOINED"/>
    <property type="molecule type" value="Genomic_DNA"/>
</dbReference>
<dbReference type="EMBL" id="U04514">
    <property type="protein sequence ID" value="AAC27816.1"/>
    <property type="status" value="JOINED"/>
    <property type="molecule type" value="Genomic_DNA"/>
</dbReference>
<dbReference type="EMBL" id="U04515">
    <property type="protein sequence ID" value="AAC27816.1"/>
    <property type="status" value="JOINED"/>
    <property type="molecule type" value="Genomic_DNA"/>
</dbReference>
<dbReference type="EMBL" id="U04516">
    <property type="protein sequence ID" value="AAC27816.1"/>
    <property type="status" value="JOINED"/>
    <property type="molecule type" value="Genomic_DNA"/>
</dbReference>
<dbReference type="EMBL" id="U04517">
    <property type="protein sequence ID" value="AAC27816.1"/>
    <property type="status" value="JOINED"/>
    <property type="molecule type" value="Genomic_DNA"/>
</dbReference>
<dbReference type="EMBL" id="U04518">
    <property type="protein sequence ID" value="AAC27816.1"/>
    <property type="status" value="JOINED"/>
    <property type="molecule type" value="Genomic_DNA"/>
</dbReference>
<dbReference type="EMBL" id="U04519">
    <property type="protein sequence ID" value="AAC27816.1"/>
    <property type="status" value="JOINED"/>
    <property type="molecule type" value="Genomic_DNA"/>
</dbReference>
<dbReference type="EMBL" id="U04520">
    <property type="protein sequence ID" value="AAF66217.2"/>
    <property type="molecule type" value="Genomic_DNA"/>
</dbReference>
<dbReference type="EMBL" id="U04470">
    <property type="protein sequence ID" value="AAF66217.2"/>
    <property type="status" value="JOINED"/>
    <property type="molecule type" value="Genomic_DNA"/>
</dbReference>
<dbReference type="EMBL" id="U04471">
    <property type="protein sequence ID" value="AAF66217.2"/>
    <property type="status" value="JOINED"/>
    <property type="molecule type" value="Genomic_DNA"/>
</dbReference>
<dbReference type="EMBL" id="U04472">
    <property type="protein sequence ID" value="AAF66217.2"/>
    <property type="status" value="JOINED"/>
    <property type="molecule type" value="Genomic_DNA"/>
</dbReference>
<dbReference type="EMBL" id="U04473">
    <property type="protein sequence ID" value="AAF66217.2"/>
    <property type="status" value="JOINED"/>
    <property type="molecule type" value="Genomic_DNA"/>
</dbReference>
<dbReference type="EMBL" id="U04474">
    <property type="protein sequence ID" value="AAF66217.2"/>
    <property type="status" value="JOINED"/>
    <property type="molecule type" value="Genomic_DNA"/>
</dbReference>
<dbReference type="EMBL" id="U04476">
    <property type="protein sequence ID" value="AAF66217.2"/>
    <property type="status" value="JOINED"/>
    <property type="molecule type" value="Genomic_DNA"/>
</dbReference>
<dbReference type="EMBL" id="U04477">
    <property type="protein sequence ID" value="AAF66217.2"/>
    <property type="status" value="JOINED"/>
    <property type="molecule type" value="Genomic_DNA"/>
</dbReference>
<dbReference type="EMBL" id="U04478">
    <property type="protein sequence ID" value="AAF66217.2"/>
    <property type="status" value="JOINED"/>
    <property type="molecule type" value="Genomic_DNA"/>
</dbReference>
<dbReference type="EMBL" id="U04479">
    <property type="protein sequence ID" value="AAF66217.2"/>
    <property type="status" value="JOINED"/>
    <property type="molecule type" value="Genomic_DNA"/>
</dbReference>
<dbReference type="EMBL" id="U04480">
    <property type="protein sequence ID" value="AAF66217.2"/>
    <property type="status" value="JOINED"/>
    <property type="molecule type" value="Genomic_DNA"/>
</dbReference>
<dbReference type="EMBL" id="U04483">
    <property type="protein sequence ID" value="AAF66217.2"/>
    <property type="status" value="JOINED"/>
    <property type="molecule type" value="Genomic_DNA"/>
</dbReference>
<dbReference type="EMBL" id="U04485">
    <property type="protein sequence ID" value="AAF66217.2"/>
    <property type="status" value="JOINED"/>
    <property type="molecule type" value="Genomic_DNA"/>
</dbReference>
<dbReference type="EMBL" id="U04486">
    <property type="protein sequence ID" value="AAF66217.2"/>
    <property type="status" value="JOINED"/>
    <property type="molecule type" value="Genomic_DNA"/>
</dbReference>
<dbReference type="EMBL" id="U04487">
    <property type="protein sequence ID" value="AAF66217.2"/>
    <property type="status" value="JOINED"/>
    <property type="molecule type" value="Genomic_DNA"/>
</dbReference>
<dbReference type="EMBL" id="U04488">
    <property type="protein sequence ID" value="AAF66217.2"/>
    <property type="status" value="JOINED"/>
    <property type="molecule type" value="Genomic_DNA"/>
</dbReference>
<dbReference type="EMBL" id="U04489">
    <property type="protein sequence ID" value="AAF66217.2"/>
    <property type="status" value="JOINED"/>
    <property type="molecule type" value="Genomic_DNA"/>
</dbReference>
<dbReference type="EMBL" id="U04490">
    <property type="protein sequence ID" value="AAF66217.2"/>
    <property type="status" value="JOINED"/>
    <property type="molecule type" value="Genomic_DNA"/>
</dbReference>
<dbReference type="EMBL" id="U04491">
    <property type="protein sequence ID" value="AAF66217.2"/>
    <property type="status" value="JOINED"/>
    <property type="molecule type" value="Genomic_DNA"/>
</dbReference>
<dbReference type="EMBL" id="U04492">
    <property type="protein sequence ID" value="AAF66217.2"/>
    <property type="status" value="JOINED"/>
    <property type="molecule type" value="Genomic_DNA"/>
</dbReference>
<dbReference type="EMBL" id="U04493">
    <property type="protein sequence ID" value="AAF66217.2"/>
    <property type="status" value="JOINED"/>
    <property type="molecule type" value="Genomic_DNA"/>
</dbReference>
<dbReference type="EMBL" id="U04494">
    <property type="protein sequence ID" value="AAF66217.2"/>
    <property type="status" value="JOINED"/>
    <property type="molecule type" value="Genomic_DNA"/>
</dbReference>
<dbReference type="EMBL" id="U04495">
    <property type="protein sequence ID" value="AAF66217.2"/>
    <property type="status" value="JOINED"/>
    <property type="molecule type" value="Genomic_DNA"/>
</dbReference>
<dbReference type="EMBL" id="U04496">
    <property type="protein sequence ID" value="AAF66217.2"/>
    <property type="status" value="JOINED"/>
    <property type="molecule type" value="Genomic_DNA"/>
</dbReference>
<dbReference type="EMBL" id="U04497">
    <property type="protein sequence ID" value="AAF66217.2"/>
    <property type="status" value="JOINED"/>
    <property type="molecule type" value="Genomic_DNA"/>
</dbReference>
<dbReference type="EMBL" id="U04498">
    <property type="protein sequence ID" value="AAF66217.2"/>
    <property type="status" value="JOINED"/>
    <property type="molecule type" value="Genomic_DNA"/>
</dbReference>
<dbReference type="EMBL" id="U04499">
    <property type="protein sequence ID" value="AAF66217.2"/>
    <property type="status" value="JOINED"/>
    <property type="molecule type" value="Genomic_DNA"/>
</dbReference>
<dbReference type="EMBL" id="U04500">
    <property type="protein sequence ID" value="AAF66217.2"/>
    <property type="status" value="JOINED"/>
    <property type="molecule type" value="Genomic_DNA"/>
</dbReference>
<dbReference type="EMBL" id="U04501">
    <property type="protein sequence ID" value="AAF66217.2"/>
    <property type="status" value="JOINED"/>
    <property type="molecule type" value="Genomic_DNA"/>
</dbReference>
<dbReference type="EMBL" id="U04502">
    <property type="protein sequence ID" value="AAF66217.2"/>
    <property type="status" value="JOINED"/>
    <property type="molecule type" value="Genomic_DNA"/>
</dbReference>
<dbReference type="EMBL" id="U04503">
    <property type="protein sequence ID" value="AAF66217.2"/>
    <property type="status" value="JOINED"/>
    <property type="molecule type" value="Genomic_DNA"/>
</dbReference>
<dbReference type="EMBL" id="U04504">
    <property type="protein sequence ID" value="AAF66217.2"/>
    <property type="status" value="JOINED"/>
    <property type="molecule type" value="Genomic_DNA"/>
</dbReference>
<dbReference type="EMBL" id="U04505">
    <property type="protein sequence ID" value="AAF66217.2"/>
    <property type="status" value="JOINED"/>
    <property type="molecule type" value="Genomic_DNA"/>
</dbReference>
<dbReference type="EMBL" id="U04506">
    <property type="protein sequence ID" value="AAF66217.2"/>
    <property type="status" value="JOINED"/>
    <property type="molecule type" value="Genomic_DNA"/>
</dbReference>
<dbReference type="EMBL" id="U04507">
    <property type="protein sequence ID" value="AAF66217.2"/>
    <property type="status" value="JOINED"/>
    <property type="molecule type" value="Genomic_DNA"/>
</dbReference>
<dbReference type="EMBL" id="U04508">
    <property type="protein sequence ID" value="AAF66217.2"/>
    <property type="status" value="JOINED"/>
    <property type="molecule type" value="Genomic_DNA"/>
</dbReference>
<dbReference type="EMBL" id="U04509">
    <property type="protein sequence ID" value="AAF66217.2"/>
    <property type="status" value="JOINED"/>
    <property type="molecule type" value="Genomic_DNA"/>
</dbReference>
<dbReference type="EMBL" id="U04510">
    <property type="protein sequence ID" value="AAF66217.2"/>
    <property type="status" value="JOINED"/>
    <property type="molecule type" value="Genomic_DNA"/>
</dbReference>
<dbReference type="EMBL" id="AF199451">
    <property type="protein sequence ID" value="AAF66217.2"/>
    <property type="status" value="JOINED"/>
    <property type="molecule type" value="Genomic_DNA"/>
</dbReference>
<dbReference type="EMBL" id="AF199452">
    <property type="protein sequence ID" value="AAF66217.2"/>
    <property type="status" value="JOINED"/>
    <property type="molecule type" value="Genomic_DNA"/>
</dbReference>
<dbReference type="EMBL" id="U04511">
    <property type="protein sequence ID" value="AAF66217.2"/>
    <property type="status" value="JOINED"/>
    <property type="molecule type" value="Genomic_DNA"/>
</dbReference>
<dbReference type="EMBL" id="U04512">
    <property type="protein sequence ID" value="AAF66217.2"/>
    <property type="status" value="JOINED"/>
    <property type="molecule type" value="Genomic_DNA"/>
</dbReference>
<dbReference type="EMBL" id="U04514">
    <property type="protein sequence ID" value="AAF66217.2"/>
    <property type="status" value="JOINED"/>
    <property type="molecule type" value="Genomic_DNA"/>
</dbReference>
<dbReference type="EMBL" id="U04515">
    <property type="protein sequence ID" value="AAF66217.2"/>
    <property type="status" value="JOINED"/>
    <property type="molecule type" value="Genomic_DNA"/>
</dbReference>
<dbReference type="EMBL" id="U04516">
    <property type="protein sequence ID" value="AAF66217.2"/>
    <property type="status" value="JOINED"/>
    <property type="molecule type" value="Genomic_DNA"/>
</dbReference>
<dbReference type="EMBL" id="U04517">
    <property type="protein sequence ID" value="AAF66217.2"/>
    <property type="status" value="JOINED"/>
    <property type="molecule type" value="Genomic_DNA"/>
</dbReference>
<dbReference type="EMBL" id="U04518">
    <property type="protein sequence ID" value="AAF66217.2"/>
    <property type="status" value="JOINED"/>
    <property type="molecule type" value="Genomic_DNA"/>
</dbReference>
<dbReference type="EMBL" id="U04519">
    <property type="protein sequence ID" value="AAF66217.2"/>
    <property type="status" value="JOINED"/>
    <property type="molecule type" value="Genomic_DNA"/>
</dbReference>
<dbReference type="EMBL" id="M63473">
    <property type="protein sequence ID" value="AAA51558.1"/>
    <property type="molecule type" value="Genomic_DNA"/>
</dbReference>
<dbReference type="EMBL" id="M63455">
    <property type="protein sequence ID" value="AAA51558.1"/>
    <property type="status" value="JOINED"/>
    <property type="molecule type" value="Genomic_DNA"/>
</dbReference>
<dbReference type="EMBL" id="M63456">
    <property type="protein sequence ID" value="AAA51558.1"/>
    <property type="status" value="JOINED"/>
    <property type="molecule type" value="Genomic_DNA"/>
</dbReference>
<dbReference type="EMBL" id="M63457">
    <property type="protein sequence ID" value="AAA51558.1"/>
    <property type="status" value="JOINED"/>
    <property type="molecule type" value="Genomic_DNA"/>
</dbReference>
<dbReference type="EMBL" id="M63458">
    <property type="protein sequence ID" value="AAA51558.1"/>
    <property type="status" value="JOINED"/>
    <property type="molecule type" value="Genomic_DNA"/>
</dbReference>
<dbReference type="EMBL" id="M63459">
    <property type="protein sequence ID" value="AAA51558.1"/>
    <property type="status" value="JOINED"/>
    <property type="molecule type" value="Genomic_DNA"/>
</dbReference>
<dbReference type="EMBL" id="M63460">
    <property type="protein sequence ID" value="AAA51558.1"/>
    <property type="status" value="JOINED"/>
    <property type="molecule type" value="Genomic_DNA"/>
</dbReference>
<dbReference type="EMBL" id="M63461">
    <property type="protein sequence ID" value="AAA51558.1"/>
    <property type="status" value="JOINED"/>
    <property type="molecule type" value="Genomic_DNA"/>
</dbReference>
<dbReference type="EMBL" id="M63462">
    <property type="protein sequence ID" value="AAA51558.1"/>
    <property type="status" value="JOINED"/>
    <property type="molecule type" value="Genomic_DNA"/>
</dbReference>
<dbReference type="EMBL" id="M63463">
    <property type="protein sequence ID" value="AAA51558.1"/>
    <property type="status" value="JOINED"/>
    <property type="molecule type" value="Genomic_DNA"/>
</dbReference>
<dbReference type="EMBL" id="M63464">
    <property type="protein sequence ID" value="AAA51558.1"/>
    <property type="status" value="JOINED"/>
    <property type="molecule type" value="Genomic_DNA"/>
</dbReference>
<dbReference type="EMBL" id="M63465">
    <property type="protein sequence ID" value="AAA51558.1"/>
    <property type="status" value="JOINED"/>
    <property type="molecule type" value="Genomic_DNA"/>
</dbReference>
<dbReference type="EMBL" id="M63466">
    <property type="protein sequence ID" value="AAA51558.1"/>
    <property type="status" value="JOINED"/>
    <property type="molecule type" value="Genomic_DNA"/>
</dbReference>
<dbReference type="EMBL" id="M63467">
    <property type="protein sequence ID" value="AAA51558.1"/>
    <property type="status" value="JOINED"/>
    <property type="molecule type" value="Genomic_DNA"/>
</dbReference>
<dbReference type="EMBL" id="M63468">
    <property type="protein sequence ID" value="AAA51558.1"/>
    <property type="status" value="JOINED"/>
    <property type="molecule type" value="Genomic_DNA"/>
</dbReference>
<dbReference type="EMBL" id="M63470">
    <property type="protein sequence ID" value="AAA51558.1"/>
    <property type="status" value="JOINED"/>
    <property type="molecule type" value="Genomic_DNA"/>
</dbReference>
<dbReference type="EMBL" id="M63471">
    <property type="protein sequence ID" value="AAA51558.1"/>
    <property type="status" value="JOINED"/>
    <property type="molecule type" value="Genomic_DNA"/>
</dbReference>
<dbReference type="EMBL" id="M63472">
    <property type="protein sequence ID" value="AAA51558.1"/>
    <property type="status" value="JOINED"/>
    <property type="molecule type" value="Genomic_DNA"/>
</dbReference>
<dbReference type="EMBL" id="M31115">
    <property type="protein sequence ID" value="AAA52045.1"/>
    <property type="molecule type" value="mRNA"/>
</dbReference>
<dbReference type="EMBL" id="Z37153">
    <property type="protein sequence ID" value="CAA85512.1"/>
    <property type="molecule type" value="Genomic_DNA"/>
</dbReference>
<dbReference type="EMBL" id="S69168">
    <property type="protein sequence ID" value="AAC60612.1"/>
    <property type="molecule type" value="mRNA"/>
</dbReference>
<dbReference type="EMBL" id="S59334">
    <property type="protein sequence ID" value="AAD13909.1"/>
    <property type="molecule type" value="mRNA"/>
</dbReference>
<dbReference type="EMBL" id="S75903">
    <property type="protein sequence ID" value="AAB33374.1"/>
    <property type="molecule type" value="Genomic_DNA"/>
</dbReference>
<dbReference type="CCDS" id="CCDS14543.1">
    <molecule id="P29400-1"/>
</dbReference>
<dbReference type="CCDS" id="CCDS35366.1">
    <molecule id="P29400-2"/>
</dbReference>
<dbReference type="PIR" id="S22917">
    <property type="entry name" value="S22917"/>
</dbReference>
<dbReference type="RefSeq" id="NP_000486.1">
    <molecule id="P29400-1"/>
    <property type="nucleotide sequence ID" value="NM_000495.5"/>
</dbReference>
<dbReference type="RefSeq" id="NP_203699.1">
    <molecule id="P29400-2"/>
    <property type="nucleotide sequence ID" value="NM_033380.3"/>
</dbReference>
<dbReference type="PDB" id="5NAZ">
    <property type="method" value="X-ray"/>
    <property type="resolution" value="1.85 A"/>
    <property type="chains" value="A=1457-1685"/>
</dbReference>
<dbReference type="PDB" id="6WKU">
    <property type="method" value="X-ray"/>
    <property type="resolution" value="1.76 A"/>
    <property type="chains" value="A=1461-1685"/>
</dbReference>
<dbReference type="PDBsum" id="5NAZ"/>
<dbReference type="PDBsum" id="6WKU"/>
<dbReference type="SMR" id="P29400"/>
<dbReference type="BioGRID" id="107684">
    <property type="interactions" value="58"/>
</dbReference>
<dbReference type="ComplexPortal" id="CPX-1724">
    <property type="entry name" value="Collagen type IV trimer variant 2"/>
</dbReference>
<dbReference type="ComplexPortal" id="CPX-1725">
    <property type="entry name" value="Collagen type IV trimer variant 3"/>
</dbReference>
<dbReference type="FunCoup" id="P29400">
    <property type="interactions" value="900"/>
</dbReference>
<dbReference type="IntAct" id="P29400">
    <property type="interactions" value="54"/>
</dbReference>
<dbReference type="MINT" id="P29400"/>
<dbReference type="STRING" id="9606.ENSP00000331902"/>
<dbReference type="ChEMBL" id="CHEMBL2364188"/>
<dbReference type="GlyCosmos" id="P29400">
    <property type="glycosylation" value="1 site, No reported glycans"/>
</dbReference>
<dbReference type="GlyGen" id="P29400">
    <property type="glycosylation" value="10 sites, 1 O-linked glycan (3 sites)"/>
</dbReference>
<dbReference type="iPTMnet" id="P29400"/>
<dbReference type="PhosphoSitePlus" id="P29400"/>
<dbReference type="BioMuta" id="COL4A5"/>
<dbReference type="DMDM" id="461675"/>
<dbReference type="jPOST" id="P29400"/>
<dbReference type="MassIVE" id="P29400"/>
<dbReference type="PaxDb" id="9606-ENSP00000331902"/>
<dbReference type="PeptideAtlas" id="P29400"/>
<dbReference type="ProteomicsDB" id="54566">
    <molecule id="P29400-1"/>
</dbReference>
<dbReference type="ProteomicsDB" id="54567">
    <molecule id="P29400-2"/>
</dbReference>
<dbReference type="Antibodypedia" id="56249">
    <property type="antibodies" value="213 antibodies from 23 providers"/>
</dbReference>
<dbReference type="DNASU" id="1287"/>
<dbReference type="Ensembl" id="ENST00000328300.11">
    <molecule id="P29400-2"/>
    <property type="protein sequence ID" value="ENSP00000331902.7"/>
    <property type="gene ID" value="ENSG00000188153.14"/>
</dbReference>
<dbReference type="Ensembl" id="ENST00000361603.7">
    <molecule id="P29400-1"/>
    <property type="protein sequence ID" value="ENSP00000354505.2"/>
    <property type="gene ID" value="ENSG00000188153.14"/>
</dbReference>
<dbReference type="GeneID" id="1287"/>
<dbReference type="KEGG" id="hsa:1287"/>
<dbReference type="MANE-Select" id="ENST00000328300.11">
    <molecule id="P29400-2"/>
    <property type="protein sequence ID" value="ENSP00000331902.7"/>
    <property type="RefSeq nucleotide sequence ID" value="NM_033380.3"/>
    <property type="RefSeq protein sequence ID" value="NP_203699.1"/>
</dbReference>
<dbReference type="UCSC" id="uc004enz.3">
    <molecule id="P29400-1"/>
    <property type="organism name" value="human"/>
</dbReference>
<dbReference type="AGR" id="HGNC:2207"/>
<dbReference type="CTD" id="1287"/>
<dbReference type="DisGeNET" id="1287"/>
<dbReference type="GeneCards" id="COL4A5"/>
<dbReference type="GeneReviews" id="COL4A5"/>
<dbReference type="HGNC" id="HGNC:2207">
    <property type="gene designation" value="COL4A5"/>
</dbReference>
<dbReference type="HPA" id="ENSG00000188153">
    <property type="expression patterns" value="Low tissue specificity"/>
</dbReference>
<dbReference type="MalaCards" id="COL4A5"/>
<dbReference type="MIM" id="301050">
    <property type="type" value="phenotype"/>
</dbReference>
<dbReference type="MIM" id="303630">
    <property type="type" value="gene"/>
</dbReference>
<dbReference type="neXtProt" id="NX_P29400"/>
<dbReference type="OpenTargets" id="ENSG00000188153"/>
<dbReference type="Orphanet" id="653722">
    <property type="disease" value="Digenic Alport syndrome"/>
</dbReference>
<dbReference type="Orphanet" id="88917">
    <property type="disease" value="X-linked Alport syndrome"/>
</dbReference>
<dbReference type="Orphanet" id="1018">
    <property type="disease" value="X-linked Alport syndrome-diffuse leiomyomatosis"/>
</dbReference>
<dbReference type="PharmGKB" id="PA26722"/>
<dbReference type="VEuPathDB" id="HostDB:ENSG00000188153"/>
<dbReference type="eggNOG" id="KOG3544">
    <property type="taxonomic scope" value="Eukaryota"/>
</dbReference>
<dbReference type="GeneTree" id="ENSGT00940000162034"/>
<dbReference type="HOGENOM" id="CLU_002023_0_0_1"/>
<dbReference type="InParanoid" id="P29400"/>
<dbReference type="OMA" id="TCSNNES"/>
<dbReference type="OrthoDB" id="10071882at2759"/>
<dbReference type="PAN-GO" id="P29400">
    <property type="GO annotations" value="4 GO annotations based on evolutionary models"/>
</dbReference>
<dbReference type="TreeFam" id="TF344135"/>
<dbReference type="PathwayCommons" id="P29400"/>
<dbReference type="Reactome" id="R-HSA-1442490">
    <property type="pathway name" value="Collagen degradation"/>
</dbReference>
<dbReference type="Reactome" id="R-HSA-1474244">
    <property type="pathway name" value="Extracellular matrix organization"/>
</dbReference>
<dbReference type="Reactome" id="R-HSA-1650814">
    <property type="pathway name" value="Collagen biosynthesis and modifying enzymes"/>
</dbReference>
<dbReference type="Reactome" id="R-HSA-186797">
    <property type="pathway name" value="Signaling by PDGF"/>
</dbReference>
<dbReference type="Reactome" id="R-HSA-2022090">
    <property type="pathway name" value="Assembly of collagen fibrils and other multimeric structures"/>
</dbReference>
<dbReference type="Reactome" id="R-HSA-216083">
    <property type="pathway name" value="Integrin cell surface interactions"/>
</dbReference>
<dbReference type="Reactome" id="R-HSA-2214320">
    <property type="pathway name" value="Anchoring fibril formation"/>
</dbReference>
<dbReference type="Reactome" id="R-HSA-2243919">
    <property type="pathway name" value="Crosslinking of collagen fibrils"/>
</dbReference>
<dbReference type="Reactome" id="R-HSA-3000157">
    <property type="pathway name" value="Laminin interactions"/>
</dbReference>
<dbReference type="Reactome" id="R-HSA-3000171">
    <property type="pathway name" value="Non-integrin membrane-ECM interactions"/>
</dbReference>
<dbReference type="Reactome" id="R-HSA-3000178">
    <property type="pathway name" value="ECM proteoglycans"/>
</dbReference>
<dbReference type="Reactome" id="R-HSA-419037">
    <property type="pathway name" value="NCAM1 interactions"/>
</dbReference>
<dbReference type="Reactome" id="R-HSA-8948216">
    <property type="pathway name" value="Collagen chain trimerization"/>
</dbReference>
<dbReference type="Reactome" id="R-HSA-9010553">
    <property type="pathway name" value="Regulation of expression of SLITs and ROBOs"/>
</dbReference>
<dbReference type="SignaLink" id="P29400"/>
<dbReference type="SIGNOR" id="P29400"/>
<dbReference type="BioGRID-ORCS" id="1287">
    <property type="hits" value="15 hits in 773 CRISPR screens"/>
</dbReference>
<dbReference type="ChiTaRS" id="COL4A5">
    <property type="organism name" value="human"/>
</dbReference>
<dbReference type="GeneWiki" id="COL4A5"/>
<dbReference type="GenomeRNAi" id="1287"/>
<dbReference type="Pharos" id="P29400">
    <property type="development level" value="Tbio"/>
</dbReference>
<dbReference type="PRO" id="PR:P29400"/>
<dbReference type="Proteomes" id="UP000005640">
    <property type="component" value="Chromosome X"/>
</dbReference>
<dbReference type="RNAct" id="P29400">
    <property type="molecule type" value="protein"/>
</dbReference>
<dbReference type="Bgee" id="ENSG00000188153">
    <property type="expression patterns" value="Expressed in mucosa of stomach and 184 other cell types or tissues"/>
</dbReference>
<dbReference type="ExpressionAtlas" id="P29400">
    <property type="expression patterns" value="baseline and differential"/>
</dbReference>
<dbReference type="GO" id="GO:0005587">
    <property type="term" value="C:collagen type IV trimer"/>
    <property type="evidence" value="ECO:0000304"/>
    <property type="project" value="ProtInc"/>
</dbReference>
<dbReference type="GO" id="GO:0062023">
    <property type="term" value="C:collagen-containing extracellular matrix"/>
    <property type="evidence" value="ECO:0007005"/>
    <property type="project" value="BHF-UCL"/>
</dbReference>
<dbReference type="GO" id="GO:0005788">
    <property type="term" value="C:endoplasmic reticulum lumen"/>
    <property type="evidence" value="ECO:0000304"/>
    <property type="project" value="Reactome"/>
</dbReference>
<dbReference type="GO" id="GO:0005576">
    <property type="term" value="C:extracellular region"/>
    <property type="evidence" value="ECO:0000304"/>
    <property type="project" value="Reactome"/>
</dbReference>
<dbReference type="GO" id="GO:0005615">
    <property type="term" value="C:extracellular space"/>
    <property type="evidence" value="ECO:0000318"/>
    <property type="project" value="GO_Central"/>
</dbReference>
<dbReference type="GO" id="GO:0031594">
    <property type="term" value="C:neuromuscular junction"/>
    <property type="evidence" value="ECO:0007669"/>
    <property type="project" value="Ensembl"/>
</dbReference>
<dbReference type="GO" id="GO:0030020">
    <property type="term" value="F:extracellular matrix structural constituent conferring tensile strength"/>
    <property type="evidence" value="ECO:0007005"/>
    <property type="project" value="BHF-UCL"/>
</dbReference>
<dbReference type="GO" id="GO:0038063">
    <property type="term" value="P:collagen-activated tyrosine kinase receptor signaling pathway"/>
    <property type="evidence" value="ECO:0007669"/>
    <property type="project" value="Ensembl"/>
</dbReference>
<dbReference type="GO" id="GO:0007528">
    <property type="term" value="P:neuromuscular junction development"/>
    <property type="evidence" value="ECO:0007669"/>
    <property type="project" value="Ensembl"/>
</dbReference>
<dbReference type="FunFam" id="2.170.240.10:FF:000001">
    <property type="entry name" value="Collagen IV alpha 1 chain"/>
    <property type="match status" value="1"/>
</dbReference>
<dbReference type="Gene3D" id="2.170.240.10">
    <property type="entry name" value="Collagen IV, non-collagenous"/>
    <property type="match status" value="1"/>
</dbReference>
<dbReference type="InterPro" id="IPR008160">
    <property type="entry name" value="Collagen"/>
</dbReference>
<dbReference type="InterPro" id="IPR001442">
    <property type="entry name" value="Collagen_IV_NC"/>
</dbReference>
<dbReference type="InterPro" id="IPR036954">
    <property type="entry name" value="Collagen_IV_NC_sf"/>
</dbReference>
<dbReference type="InterPro" id="IPR050149">
    <property type="entry name" value="Collagen_superfamily"/>
</dbReference>
<dbReference type="InterPro" id="IPR016187">
    <property type="entry name" value="CTDL_fold"/>
</dbReference>
<dbReference type="PANTHER" id="PTHR24023">
    <property type="entry name" value="COLLAGEN ALPHA"/>
    <property type="match status" value="1"/>
</dbReference>
<dbReference type="PANTHER" id="PTHR24023:SF1019">
    <property type="entry name" value="COLLAGEN ALPHA-5(IV) CHAIN ISOFORM X1"/>
    <property type="match status" value="1"/>
</dbReference>
<dbReference type="Pfam" id="PF01413">
    <property type="entry name" value="C4"/>
    <property type="match status" value="2"/>
</dbReference>
<dbReference type="Pfam" id="PF01391">
    <property type="entry name" value="Collagen"/>
    <property type="match status" value="18"/>
</dbReference>
<dbReference type="SMART" id="SM00111">
    <property type="entry name" value="C4"/>
    <property type="match status" value="2"/>
</dbReference>
<dbReference type="SUPFAM" id="SSF56436">
    <property type="entry name" value="C-type lectin-like"/>
    <property type="match status" value="2"/>
</dbReference>
<dbReference type="PROSITE" id="PS51403">
    <property type="entry name" value="NC1_IV"/>
    <property type="match status" value="1"/>
</dbReference>
<organism>
    <name type="scientific">Homo sapiens</name>
    <name type="common">Human</name>
    <dbReference type="NCBI Taxonomy" id="9606"/>
    <lineage>
        <taxon>Eukaryota</taxon>
        <taxon>Metazoa</taxon>
        <taxon>Chordata</taxon>
        <taxon>Craniata</taxon>
        <taxon>Vertebrata</taxon>
        <taxon>Euteleostomi</taxon>
        <taxon>Mammalia</taxon>
        <taxon>Eutheria</taxon>
        <taxon>Euarchontoglires</taxon>
        <taxon>Primates</taxon>
        <taxon>Haplorrhini</taxon>
        <taxon>Catarrhini</taxon>
        <taxon>Hominidae</taxon>
        <taxon>Homo</taxon>
    </lineage>
</organism>
<sequence length="1685" mass="161044">MKLRGVSLAAGLFLLALSLWGQPAEAAACYGCSPGSKCDCSGIKGEKGERGFPGLEGHPGLPGFPGPEGPPGPRGQKGDDGIPGPPGPKGIRGPPGLPGFPGTPGLPGMPGHDGAPGPQGIPGCNGTKGERGFPGSPGFPGLQGPPGPPGIPGMKGEPGSIIMSSLPGPKGNPGYPGPPGIQGLPGPTGIPGPIGPPGPPGLMGPPGPPGLPGPKGNMGLNFQGPKGEKGEQGLQGPPGPPGQISEQKRPIDVEFQKGDQGLPGDRGPPGPPGIRGPPGPPGGEKGEKGEQGEPGKRGKPGKDGENGQPGIPGLPGDPGYPGEPGRDGEKGQKGDTGPPGPPGLVIPRPGTGITIGEKGNIGLPGLPGEKGERGFPGIQGPPGLPGPPGAAVMGPPGPPGFPGERGQKGDEGPPGISIPGPPGLDGQPGAPGLPGPPGPAGPHIPPSDEICEPGPPGPPGSPGDKGLQGEQGVKGDKGDTCFNCIGTGISGPPGQPGLPGLPGPPGSLGFPGQKGEKGQAGATGPKGLPGIPGAPGAPGFPGSKGEPGDILTFPGMKGDKGELGSPGAPGLPGLPGTPGQDGLPGLPGPKGEPGGITFKGERGPPGNPGLPGLPGNIGPMGPPGFGPPGPVGEKGIQGVAGNPGQPGIPGPKGDPGQTITQPGKPGLPGNPGRDGDVGLPGDPGLPGQPGLPGIPGSKGEPGIPGIGLPGPPGPKGFPGIPGPPGAPGTPGRIGLEGPPGPPGFPGPKGEPGFALPGPPGPPGLPGFKGALGPKGDRGFPGPPGPPGRTGLDGLPGPKGDVGPNGQPGPMGPPGLPGIGVQGPPGPPGIPGPIGQPGLHGIPGEKGDPGPPGLDVPGPPGERGSPGIPGAPGPIGPPGSPGLPGKAGASGFPGTKGEMGMMGPPGPPGPLGIPGRSGVPGLKGDDGLQGQPGLPGPTGEKGSKGEPGLPGPPGPMDPNLLGSKGEKGEPGLPGIPGVSGPKGYQGLPGDPGQPGLSGQPGLPGPPGPKGNPGLPGQPGLIGPPGLKGTIGDMGFPGPQGVEGPPGPSGVPGQPGSPGLPGQKGDKGDPGISSIGLPGLPGPKGEPGLPGYPGNPGIKGSVGDPGLPGLPGTPGAKGQPGLPGFPGTPGPPGPKGISGPPGNPGLPGEPGPVGGGGHPGQPGPPGEKGKPGQDGIPGPAGQKGEPGQPGFGNPGPPGLPGLSGQKGDGGLPGIPGNPGLPGPKGEPGFHGFPGVQGPPGPPGSPGPALEGPKGNPGPQGPPGRPGLPGPEGPPGLPGNGGIKGEKGNPGQPGLPGLPGLKGDQGPPGLQGNPGRPGLNGMKGDPGLPGVPGFPGMKGPSGVPGSAGPEGEPGLIGPPGPPGLPGPSGQSIIIKGDAGPPGIPGQPGLKGLPGPQGPQGLPGPTGPPGDPGRNGLPGFDGAGGRKGDPGLPGQPGTRGLDGPPGPDGLQGPPGPPGTSSVAHGFLITRHSQTTDAPQCPQGTLQVYEGFSLLYVQGNKRAHGQDLGTAGSCLRRFSTMPFMFCNINNVCNFASRNDYSYWLSTPEPMPMSMQPLKGQSIQPFISRCAVCEAPAVVIAVHSQTIQIPHCPQGWDSLWIGYSFMMHTSAGAEGSGQALASPGSCLEEFRSAPFIECHGRGTCNYYANSYSFWLATVDVSDMFSKPQSETLKAGDLRTRISRCQVCMKRT</sequence>
<gene>
    <name type="primary">COL4A5</name>
</gene>
<accession>P29400</accession>
<accession>Q16006</accession>
<accession>Q16126</accession>
<accession>Q6LD84</accession>
<accession>Q7Z700</accession>
<accession>Q9NUB7</accession>
<comment type="function">
    <text>Type IV collagen is the major structural component of glomerular basement membranes (GBM), forming a 'chicken-wire' meshwork together with laminins, proteoglycans and entactin/nidogen.</text>
</comment>
<comment type="subunit">
    <text>There are six type IV collagen isoforms, alpha 1(IV)-alpha 6(IV), each of which can form a triple helix structure with 2 other chains to generate type IV collagen network.</text>
</comment>
<comment type="interaction">
    <interactant intactId="EBI-12211159">
        <id>P29400-2</id>
    </interactant>
    <interactant intactId="EBI-7131019">
        <id>Q8TB40</id>
        <label>ABHD4</label>
    </interactant>
    <organismsDiffer>false</organismsDiffer>
    <experiments>3</experiments>
</comment>
<comment type="interaction">
    <interactant intactId="EBI-12211159">
        <id>P29400-2</id>
    </interactant>
    <interactant intactId="EBI-77613">
        <id>P05067</id>
        <label>APP</label>
    </interactant>
    <organismsDiffer>false</organismsDiffer>
    <experiments>3</experiments>
</comment>
<comment type="interaction">
    <interactant intactId="EBI-12211159">
        <id>P29400-2</id>
    </interactant>
    <interactant intactId="EBI-3904417">
        <id>Q99437</id>
        <label>ATP6V0B</label>
    </interactant>
    <organismsDiffer>false</organismsDiffer>
    <experiments>3</experiments>
</comment>
<comment type="interaction">
    <interactant intactId="EBI-12211159">
        <id>P29400-2</id>
    </interactant>
    <interactant intactId="EBI-7996695">
        <id>Q8WZ55</id>
        <label>BSND</label>
    </interactant>
    <organismsDiffer>false</organismsDiffer>
    <experiments>3</experiments>
</comment>
<comment type="interaction">
    <interactant intactId="EBI-12211159">
        <id>P29400-2</id>
    </interactant>
    <interactant intactId="EBI-6657396">
        <id>P19397</id>
        <label>CD53</label>
    </interactant>
    <organismsDiffer>false</organismsDiffer>
    <experiments>3</experiments>
</comment>
<comment type="interaction">
    <interactant intactId="EBI-12211159">
        <id>P29400-2</id>
    </interactant>
    <interactant intactId="EBI-7797864">
        <id>P11912</id>
        <label>CD79A</label>
    </interactant>
    <organismsDiffer>false</organismsDiffer>
    <experiments>3</experiments>
</comment>
<comment type="interaction">
    <interactant intactId="EBI-12211159">
        <id>P29400-2</id>
    </interactant>
    <interactant intactId="EBI-2622997">
        <id>Q9HA82</id>
        <label>CERS4</label>
    </interactant>
    <organismsDiffer>false</organismsDiffer>
    <experiments>3</experiments>
</comment>
<comment type="interaction">
    <interactant intactId="EBI-12211159">
        <id>P29400-2</id>
    </interactant>
    <interactant intactId="EBI-740744">
        <id>O95471</id>
        <label>CLDN7</label>
    </interactant>
    <organismsDiffer>false</organismsDiffer>
    <experiments>3</experiments>
</comment>
<comment type="interaction">
    <interactant intactId="EBI-12211159">
        <id>P29400-2</id>
    </interactant>
    <interactant intactId="EBI-18535450">
        <id>Q9GZR5</id>
        <label>ELOVL4</label>
    </interactant>
    <organismsDiffer>false</organismsDiffer>
    <experiments>3</experiments>
</comment>
<comment type="interaction">
    <interactant intactId="EBI-12211159">
        <id>P29400-2</id>
    </interactant>
    <interactant intactId="EBI-781551">
        <id>Q9Y282</id>
        <label>ERGIC3</label>
    </interactant>
    <organismsDiffer>false</organismsDiffer>
    <experiments>3</experiments>
</comment>
<comment type="interaction">
    <interactant intactId="EBI-12211159">
        <id>P29400-2</id>
    </interactant>
    <interactant intactId="EBI-18304435">
        <id>Q5JX71</id>
        <label>FAM209A</label>
    </interactant>
    <organismsDiffer>false</organismsDiffer>
    <experiments>3</experiments>
</comment>
<comment type="interaction">
    <interactant intactId="EBI-12211159">
        <id>P29400-2</id>
    </interactant>
    <interactant intactId="EBI-2833872">
        <id>O15552</id>
        <label>FFAR2</label>
    </interactant>
    <organismsDiffer>false</organismsDiffer>
    <experiments>3</experiments>
</comment>
<comment type="interaction">
    <interactant intactId="EBI-12211159">
        <id>P29400-2</id>
    </interactant>
    <interactant intactId="EBI-11721746">
        <id>Q8TED1</id>
        <label>GPX8</label>
    </interactant>
    <organismsDiffer>false</organismsDiffer>
    <experiments>3</experiments>
</comment>
<comment type="interaction">
    <interactant intactId="EBI-12211159">
        <id>P29400-2</id>
    </interactant>
    <interactant intactId="EBI-12017638">
        <id>P48051</id>
        <label>KCNJ6</label>
    </interactant>
    <organismsDiffer>false</organismsDiffer>
    <experiments>3</experiments>
</comment>
<comment type="interaction">
    <interactant intactId="EBI-12211159">
        <id>P29400-2</id>
    </interactant>
    <interactant intactId="EBI-11956541">
        <id>Q9GZY8-5</id>
        <label>MFF</label>
    </interactant>
    <organismsDiffer>false</organismsDiffer>
    <experiments>3</experiments>
</comment>
<comment type="interaction">
    <interactant intactId="EBI-12211159">
        <id>P29400-2</id>
    </interactant>
    <interactant intactId="EBI-3923617">
        <id>Q9H2K0</id>
        <label>MTIF3</label>
    </interactant>
    <organismsDiffer>false</organismsDiffer>
    <experiments>3</experiments>
</comment>
<comment type="interaction">
    <interactant intactId="EBI-12211159">
        <id>P29400-2</id>
    </interactant>
    <interactant intactId="EBI-14061804">
        <id>Q68D85</id>
        <label>NCR3LG1</label>
    </interactant>
    <organismsDiffer>false</organismsDiffer>
    <experiments>3</experiments>
</comment>
<comment type="interaction">
    <interactant intactId="EBI-12211159">
        <id>P29400-2</id>
    </interactant>
    <interactant intactId="EBI-10969203">
        <id>O14524-2</id>
        <label>NEMP1</label>
    </interactant>
    <organismsDiffer>false</organismsDiffer>
    <experiments>3</experiments>
</comment>
<comment type="interaction">
    <interactant intactId="EBI-12211159">
        <id>P29400-2</id>
    </interactant>
    <interactant intactId="EBI-10269209">
        <id>Q8NC24</id>
        <label>RELL2</label>
    </interactant>
    <organismsDiffer>false</organismsDiffer>
    <experiments>3</experiments>
</comment>
<comment type="interaction">
    <interactant intactId="EBI-12211159">
        <id>P29400-2</id>
    </interactant>
    <interactant intactId="EBI-3920694">
        <id>Q9NR31</id>
        <label>SAR1A</label>
    </interactant>
    <organismsDiffer>false</organismsDiffer>
    <experiments>3</experiments>
</comment>
<comment type="interaction">
    <interactant intactId="EBI-12211159">
        <id>P29400-2</id>
    </interactant>
    <interactant intactId="EBI-17456472">
        <id>Q96EP9</id>
        <label>SLC10A4</label>
    </interactant>
    <organismsDiffer>false</organismsDiffer>
    <experiments>3</experiments>
</comment>
<comment type="interaction">
    <interactant intactId="EBI-12211159">
        <id>P29400-2</id>
    </interactant>
    <interactant intactId="EBI-18159983">
        <id>Q3KNW5</id>
        <label>SLC10A6</label>
    </interactant>
    <organismsDiffer>false</organismsDiffer>
    <experiments>3</experiments>
</comment>
<comment type="interaction">
    <interactant intactId="EBI-12211159">
        <id>P29400-2</id>
    </interactant>
    <interactant intactId="EBI-17595455">
        <id>P54219-3</id>
        <label>SLC18A1</label>
    </interactant>
    <organismsDiffer>false</organismsDiffer>
    <experiments>3</experiments>
</comment>
<comment type="interaction">
    <interactant intactId="EBI-12211159">
        <id>P29400-2</id>
    </interactant>
    <interactant intactId="EBI-17295964">
        <id>Q9NQQ7-3</id>
        <label>SLC35C2</label>
    </interactant>
    <organismsDiffer>false</organismsDiffer>
    <experiments>3</experiments>
</comment>
<comment type="interaction">
    <interactant intactId="EBI-12211159">
        <id>P29400-2</id>
    </interactant>
    <interactant intactId="EBI-12898013">
        <id>Q9NP94</id>
        <label>SLC39A2</label>
    </interactant>
    <organismsDiffer>false</organismsDiffer>
    <experiments>3</experiments>
</comment>
<comment type="interaction">
    <interactant intactId="EBI-12211159">
        <id>P29400-2</id>
    </interactant>
    <interactant intactId="EBI-726691">
        <id>Q8WY91</id>
        <label>THAP4</label>
    </interactant>
    <organismsDiffer>false</organismsDiffer>
    <experiments>3</experiments>
</comment>
<comment type="interaction">
    <interactant intactId="EBI-12211159">
        <id>P29400-2</id>
    </interactant>
    <interactant intactId="EBI-11742770">
        <id>Q96HE8</id>
        <label>TMEM80</label>
    </interactant>
    <organismsDiffer>false</organismsDiffer>
    <experiments>3</experiments>
</comment>
<comment type="interaction">
    <interactant intactId="EBI-12211159">
        <id>P29400-2</id>
    </interactant>
    <interactant intactId="EBI-12195249">
        <id>Q5TGU0</id>
        <label>TSPO2</label>
    </interactant>
    <organismsDiffer>false</organismsDiffer>
    <experiments>3</experiments>
</comment>
<comment type="subcellular location">
    <subcellularLocation>
        <location>Secreted</location>
        <location>Extracellular space</location>
        <location>Extracellular matrix</location>
        <location>Basement membrane</location>
    </subcellularLocation>
</comment>
<comment type="alternative products">
    <event type="alternative splicing"/>
    <isoform>
        <id>P29400-1</id>
        <name>1</name>
        <sequence type="displayed"/>
    </isoform>
    <isoform>
        <id>P29400-2</id>
        <name>2</name>
        <sequence type="described" ref="VSP_001173"/>
    </isoform>
</comment>
<comment type="tissue specificity">
    <text>Isoform 2 is found in kidney.</text>
</comment>
<comment type="domain">
    <text>Alpha chains of type IV collagen have a non-collagenous domain (NC1) at their C-terminus, frequent interruptions of the G-X-Y repeats in the long central triple-helical domain (which may cause flexibility in the triple helix), and a short N-terminal triple-helical 7S domain.</text>
</comment>
<comment type="PTM">
    <text>Prolines at the third position of the tripeptide repeating unit (G-X-Y) are hydroxylated in some or all of the chains.</text>
</comment>
<comment type="PTM">
    <text>Type IV collagens contain numerous cysteine residues which are involved in inter- and intramolecular disulfide bonding. 12 of these, located in the NC1 domain, are conserved in all known type IV collagens.</text>
</comment>
<comment type="PTM">
    <text evidence="1">The trimeric structure of the NC1 domains is stabilized by covalent bonds between Lys and Met residues.</text>
</comment>
<comment type="disease" evidence="5 6 7 8 9 10 11 12 13 14 15 16 17 18 19 20 21 22 23 24 25 26">
    <disease id="DI-00082">
        <name>Alport syndrome 1, X-linked</name>
        <acronym>ATS1</acronym>
        <description>A syndrome that is characterized by progressive glomerulonephritis, renal failure, sensorineural deafness, specific eye abnormalities (lenticonous and macular flecks), and glomerular basement membrane defects. The disorder shows considerable heterogeneity in that families differ in the age of end-stage renal disease and the occurrence of deafness.</description>
        <dbReference type="MIM" id="301050"/>
    </disease>
    <text>The disease is caused by variants affecting the gene represented in this entry.</text>
</comment>
<comment type="disease">
    <text>Deletions covering the N-terminal regions of COL4A5 and COL4A6, which are localized in a head-to-head manner, are found in the chromosome Xq22.3 centromeric deletion syndrome. This results in a phenotype with features of diffuse leiomyomatosis and Alport syndrome (DL-ATS).</text>
</comment>
<comment type="miscellaneous">
    <molecule>Isoform 2</molecule>
    <text evidence="27">Contains 2 extra G-X-X repeats into the triple-helix domain.</text>
</comment>
<comment type="similarity">
    <text evidence="3">Belongs to the type IV collagen family.</text>
</comment>
<comment type="online information" name="Alport syndrome and COL4A5">
    <link uri="http://www.arup.utah.edu/database/ALPORT/ALPORT_welcome.php"/>
</comment>